<sequence>MAAQVAPAAASSLGNPPPPPPSELKKAEQQQREEAGGEAAAAAAAERGEMKAAAGQESEGPAVGPPQPLGKELQDGAESNGGGGGGGAGSGGGPGAEPDLKNSNGNAGPRPALNNNLTEPPGGGGGGSSDGVGAPPHSAAAALPPPAYGFGQPYGRSPSAVAAAAAAVFHQQHGGQQSPGLAALQSGGGGGLEPYAGPQQNSHDHGFPNHQYNSYYPNRSAYPPPAPAYALSSPRGGTPGSGAAAAAGSKPPPSSSASASSSSSSFAQQRFGAMGGGGPSAAGGGTPQPTATPTLNQLLTSPSSARGYQGYPGGDYSGGPQDGGAGKGPADMASQCWGAAAAAAAAAAASGGAQQRSHHAPMSPGSSGGGGQPLARTPQPSSPMDQMGKMRPQPYGGTNPYSQQQGPPSGPQQGHGYPGQPYGSQTPQRYPMTMQGRAQSAMGGLSYTQQIPPYGQQGPSGYGQQGQTPYYNQQSPHPQQQQPPYSQQPPSQTPHAQPSYQQQPQSQPPQLQSSQPPYSQQPSQPPHQQSPAPYPSQQSTTQQHPQSQPPYSQPQAQSPYQQQQPQQPAPSTLSQQAAYPQPQSQQSQQTAYSQQRFPPPQELSQDSFGSQASSAPSMTSSKGGQEDMNLSLQSRPSSLPDLSGSIDDLPMGTEGALSPGVSTSGISSSQGEQSNPAQSPFSPHTSPHLPGIRGPSPSPVGSPASVAQSRSGPLSPAAVPGNQMPPRPPSGQSDSIMHPSMNQSSIAQDRGYMQRNPQMPQYSSPQPGSALSPRQPSGGQIHTGMGSYQQNSMGSYGPQGGQYGPQGGYPRQPNYNALPNANYPSAGMAGGINPMGAGGQMHGQPGIPPYGTLPPGRMSHASMGNRPYGPNMANMPPQVGSGMCPPPGGMNRKTQETAVAMHVAANSIQNRPPGYPNMNQGGMMGTGPPYGQGINSMAGMINPQGPPYSMGGTMANNSAGMAASPEMMGLGDVKLTPATKMNNKADGTPKTESKSKKSSSSTTTNEKITKLYELGGEPERKMWVDRYLAFTEEKAMGMTNLPAVGRKPLDLYRLYVSVKEIGGLTQVNKNKKWRELATNLNVGTSSSAASSLKKQYIQCLYAFECKIERGEDPPPDIFAAADSKKSQPKIQPPSPAGSGSMQGPQTPQSTSSSMAEGGDLKPPTPASTPHSQIPPLPGMSRSNSVGIQDAFNDGSDSTFQKRNSMTPNPGYQPSMNTSDMMGRMSYEPNKDPYGSMRKAPGSDPFMSSGQGPNGGMGDPYSRAAGPGLGNVAMGPRQHYPYGGPYDRVRTEPGIGPEGNMSTGAPQPNLMPSNPDSGMYSPSRYPPQQQQQQQQRHDSYGNQFSTQGTPSGSPFPSQQTTMYQQQQQNYKRPMDGTYGPPAKRHEGEMYSVPYSTGQGQPQQQQLPPAQPQPASQQQAAQPSPQQDVYNQYGNAYPATATAATERRPAGGPQNQFPFQFGRDRVSAPPGTNAQQNMPPQMMGGPIQASAEVAQQGTMWQGRNDMTYNYANRQSTGSAPQGPAYHGVNRTDEMLHTDQRANHEGSWPSHGTRQPPYGPSAPVPPMTRPPPSNYQPPPSMQNHIPQVSSPAPLPRPMENRTSPSKSPFLHSGMKMQKAGPPVPASHIAPAPVQPPMIRRDITFPPGSVEATQPVLKQRRRLTMKDIGTPEAWRVMMSLKSGLLAESTWALDTINILLYDDNSIMTFNLSQLPGLLELLVEYFRRCLIEIFGILKEYEVGDPGQRTLLDPGRFSKVSSPAPMEGGEEEEELLGPKLEEEEEEEVVENDEEIAFSGKDKPASENSEEKLISKFDKLPVKIVQKNDPFVVDCSDKLGRVQEFDSGLLHWRIGGGDTTEHIQTHFESKTELLPSRPHAPCPPAPRKHVTTAEGTPGTTDQEGPPPDGPPEKRITATMDDMLSTRSSTLTEDGAKSSEAIKESSKFPFGISPAQSHRNIKILEDEPHSKDETPLCTLLDWQDSLAKRCVCVSNTIRSLSFVPGNDFEMSKHPGLLLILGKLILLHHKHPERKQAPLTYEKEEEQDQGVSCNKVEWWWDCLEMLRENTLVTLANISGQLDLSPYPESICLPVLDGLLHWAVCPSAEAQDPFSTLGPNAVLSPQRLVLETLSKLSIQDNNVDLILATPPFSRLEKLYSTMVRFLSDRKNPVCREMAVVLLANLAQGDSLAARAIAVQKGSIGNLLGFLEDSLAATQFQQSQASLLHMQNPPFEPTSVDMMRRAARALLALAKVDENHSEFTLYESRLLDISVSPLMNSLVSQVICDVLFLIGQS</sequence>
<comment type="function">
    <text evidence="1 21 22 23">Involved in transcriptional activation and repression of select genes by chromatin remodeling (alteration of DNA-nucleosome topology). Component of SWI/SNF chromatin remodeling complexes that carry out key enzymatic activities, changing chromatin structure by altering DNA-histone contacts within a nucleosome in an ATP-dependent manner. Binds DNA non-specifically. Belongs to the neural progenitors-specific chromatin remodeling complex (npBAF complex) and the neuron-specific chromatin remodeling complex (nBAF complex). During neural development a switch from a stem/progenitor to a postmitotic chromatin remodeling mechanism occurs as neurons exit the cell cycle and become committed to their adult state. The transition from proliferating neural stem/progenitor cells to postmitotic neurons requires a switch in subunit composition of the npBAF and nBAF complexes. As neural progenitors exit mitosis and differentiate into neurons, npBAF complexes which contain ACTL6A/BAF53A and PHF10/BAF45A, are exchanged for homologous alternative ACTL6B/BAF53B and DPF1/BAF45B or DPF3/BAF45C subunits in neuron-specific complexes (nBAF). The npBAF complex is essential for the self-renewal/proliferative capacity of the multipotent neural stem cells. The nBAF complex along with CREST plays a role regulating the activity of genes essential for dendrite growth (By similarity).</text>
</comment>
<comment type="subunit">
    <text evidence="1 7 8 9 10 11 12 13 19 21 22 23">Component of SWI/SNF chromatin remodeling complexes, in some of which it can be mutually exclusive with ARID1B/BAF250B. The canonical complex contains a catalytic subunit (either SMARCA4/BRG1/BAF190A or SMARCA2/BRM/BAF190B) and at least SMARCE1, ACTL6A/BAF53, SMARCC1/BAF155, SMARCC2/BAF170, and SMARCB1/SNF5/BAF47. Other subunits specific to each of the complexes may also be present permitting several possible combinations developmentally and tissue specific (PubMed:11780067, PubMed:11988099, PubMed:12200431, PubMed:15170388, PubMed:22952240, PubMed:26601204, PubMed:8804307). Component of the BAF (SWI/SNF-A) complex, which includes at least actin (ACTB), ARID1A/BAF250A, ARID1B/BAF250B, SMARCA2/BRM, SMARCA4/BRG1/BAF190A, ACTL6A/BAF53, ACTL6B/BAF53B, SMARCE1/BAF57, SMARCC1/BAF155, SMARCC2/BAF170, SMARCB1/SNF5/INI1, and one or more SMARCD1/BAF60A, SMARCD2/BAF60B, or SMARCD3/BAF60C (PubMed:11734557, PubMed:12200431, PubMed:18765789). In muscle cells, the BAF complex also contains DPF3. Component of neural progenitors-specific chromatin remodeling complex (npBAF complex) composed of at least, ARID1A/BAF250A or ARID1B/BAF250B, SMARCD1/BAF60A, SMARCD3/BAF60C, SMARCA2/BRM/BAF190B, SMARCA4/BRG1/BAF190A, SMARCB1/BAF47, SMARCC1/BAF155, SMARCE1/BAF57, SMARCC2/BAF170, PHF10/BAF45A, ACTL6A/BAF53A and actin. Component of neuron-specific chromatin remodeling complex (nBAF complex) composed of at least, ARID1A/BAF250A or ARID1B/BAF250B, SMARCD1/BAF60A, SMARCD3/BAF60C, SMARCA2/BRM/BAF190B, SMARCA4/BRG1/BAF190A, SMARCB1/BAF47, SMARCC1/BAF155, SMARCE1/BAF57, SMARCC2/BAF170, DPF1/BAF45B, DPF3/BAF45C, ACTL6B/BAF53B and actin (By similarity). Component of a SWI/SNF-like EBAFa complex, at least composed of SMARCA4/BRG1/BAF190A, SMARCB1/BAF47/SNF5, ACTL6A/BAF53A, SMARCE1/BAF57, SMARCD1/BAF60A, SMARCC1/BAF155, SMARCC2/BAF170, BAF250A and MLLT1/ENL (PubMed:12665591). Interacts through its C-terminus with SMARCA2/BRM/BAF190B and SMARCA4/BRG1/BAF190A (PubMed:12200431, PubMed:15170388). Interacts with SMARCC1/BAF155 (PubMed:15170388). Interacts with FOS, FOSB isoform 1 and 2, FOSL1 and FOSL2 (By similarity).</text>
</comment>
<comment type="interaction">
    <interactant intactId="EBI-637887">
        <id>O14497</id>
    </interactant>
    <interactant intactId="EBI-957042">
        <id>P50553</id>
        <label>ASCL1</label>
    </interactant>
    <organismsDiffer>false</organismsDiffer>
    <experiments>2</experiments>
</comment>
<comment type="interaction">
    <interactant intactId="EBI-637887">
        <id>O14497</id>
    </interactant>
    <interactant intactId="EBI-2507362">
        <id>Q14526</id>
        <label>HIC1</label>
    </interactant>
    <organismsDiffer>false</organismsDiffer>
    <experiments>2</experiments>
</comment>
<comment type="interaction">
    <interactant intactId="EBI-637887">
        <id>O14497</id>
    </interactant>
    <interactant intactId="EBI-679562">
        <id>P51531</id>
        <label>SMARCA2</label>
    </interactant>
    <organismsDiffer>false</organismsDiffer>
    <experiments>6</experiments>
</comment>
<comment type="interaction">
    <interactant intactId="EBI-637887">
        <id>O14497</id>
    </interactant>
    <interactant intactId="EBI-302489">
        <id>P51532</id>
        <label>SMARCA4</label>
    </interactant>
    <organismsDiffer>false</organismsDiffer>
    <experiments>28</experiments>
</comment>
<comment type="interaction">
    <interactant intactId="EBI-637887">
        <id>O14497</id>
    </interactant>
    <interactant intactId="EBI-358441">
        <id>Q92925</id>
        <label>SMARCD2</label>
    </interactant>
    <organismsDiffer>false</organismsDiffer>
    <experiments>6</experiments>
</comment>
<comment type="interaction">
    <interactant intactId="EBI-15956509">
        <id>O14497-1</id>
    </interactant>
    <interactant intactId="EBI-539628">
        <id>P11388</id>
        <label>TOP2A</label>
    </interactant>
    <organismsDiffer>false</organismsDiffer>
    <experiments>2</experiments>
</comment>
<comment type="subcellular location">
    <subcellularLocation>
        <location evidence="2 6 18">Nucleus</location>
    </subcellularLocation>
</comment>
<comment type="alternative products">
    <event type="alternative splicing"/>
    <isoform>
        <id>O14497-1</id>
        <name>1</name>
        <sequence type="displayed"/>
    </isoform>
    <isoform>
        <id>O14497-2</id>
        <name>2</name>
        <sequence type="described" ref="VSP_015225"/>
    </isoform>
    <isoform>
        <id>O14497-3</id>
        <name>3</name>
        <sequence type="described" ref="VSP_037157"/>
    </isoform>
</comment>
<comment type="tissue specificity">
    <text evidence="5 6 10">Highly expressed in spleen, thymus, prostate, testis, ovary, small intestine, colon, and PBL, and at a much lower level in heart, brain, placenta, lung, liver, skeletal muscle, kidney, and pancreas.</text>
</comment>
<comment type="disease" evidence="16">
    <disease id="DI-03453">
        <name>Coffin-Siris syndrome 2</name>
        <acronym>CSS2</acronym>
        <description>A form of Coffin-Siris syndrome, a congenital multiple malformation syndrome with broad phenotypic and genetic variability. Cardinal features are intellectual disability, coarse facial features, hypertrichosis, and hypoplastic or absent fifth digit nails or phalanges. Additional features include malformations of the cardiac, gastrointestinal, genitourinary, and/or central nervous systems. Sucking/feeding difficulties, poor growth, ophthalmologic abnormalities, hearing impairment, and spinal anomalies are common findings. Both autosomal dominant and autosomal recessive inheritance patterns have been reported.</description>
        <dbReference type="MIM" id="614607"/>
    </disease>
    <text>The disease is caused by variants affecting the gene represented in this entry.</text>
</comment>
<comment type="sequence caution" evidence="25">
    <conflict type="frameshift">
        <sequence resource="EMBL-CDS" id="AAF75765"/>
    </conflict>
</comment>
<comment type="sequence caution" evidence="25">
    <conflict type="frameshift">
        <sequence resource="EMBL-CDS" id="AAG33967"/>
    </conflict>
</comment>
<comment type="sequence caution" evidence="25">
    <conflict type="frameshift">
        <sequence resource="EMBL-CDS" id="BAA23269"/>
    </conflict>
</comment>
<comment type="sequence caution" evidence="25">
    <conflict type="erroneous gene model prediction">
        <sequence resource="EMBL-CDS" id="BAA83073"/>
    </conflict>
</comment>
<comment type="sequence caution" evidence="25">
    <conflict type="frameshift">
        <sequence resource="EMBL-CDS" id="BAA83073"/>
    </conflict>
</comment>
<dbReference type="EMBL" id="AF231056">
    <property type="protein sequence ID" value="AAG33967.1"/>
    <property type="status" value="ALT_FRAME"/>
    <property type="molecule type" value="mRNA"/>
</dbReference>
<dbReference type="EMBL" id="AL512408">
    <property type="status" value="NOT_ANNOTATED_CDS"/>
    <property type="molecule type" value="Genomic_DNA"/>
</dbReference>
<dbReference type="EMBL" id="AL034380">
    <property type="status" value="NOT_ANNOTATED_CDS"/>
    <property type="molecule type" value="Genomic_DNA"/>
</dbReference>
<dbReference type="EMBL" id="CH471059">
    <property type="protein sequence ID" value="EAX07795.1"/>
    <property type="molecule type" value="Genomic_DNA"/>
</dbReference>
<dbReference type="EMBL" id="CH471059">
    <property type="protein sequence ID" value="EAX07796.1"/>
    <property type="molecule type" value="Genomic_DNA"/>
</dbReference>
<dbReference type="EMBL" id="AF521670">
    <property type="protein sequence ID" value="AAN03446.1"/>
    <property type="molecule type" value="mRNA"/>
</dbReference>
<dbReference type="EMBL" id="AF219114">
    <property type="protein sequence ID" value="AAG17549.2"/>
    <property type="molecule type" value="mRNA"/>
</dbReference>
<dbReference type="EMBL" id="AF265208">
    <property type="protein sequence ID" value="AAF75765.1"/>
    <property type="status" value="ALT_FRAME"/>
    <property type="molecule type" value="mRNA"/>
</dbReference>
<dbReference type="EMBL" id="AB001895">
    <property type="protein sequence ID" value="BAA23269.1"/>
    <property type="status" value="ALT_FRAME"/>
    <property type="molecule type" value="mRNA"/>
</dbReference>
<dbReference type="EMBL" id="AB024075">
    <property type="protein sequence ID" value="BAA83073.1"/>
    <property type="status" value="ALT_SEQ"/>
    <property type="molecule type" value="Genomic_DNA"/>
</dbReference>
<dbReference type="EMBL" id="AF268913">
    <property type="protein sequence ID" value="AAK54505.1"/>
    <property type="molecule type" value="mRNA"/>
</dbReference>
<dbReference type="EMBL" id="AK223275">
    <property type="protein sequence ID" value="BAD96995.1"/>
    <property type="molecule type" value="mRNA"/>
</dbReference>
<dbReference type="CCDS" id="CCDS285.1">
    <molecule id="O14497-1"/>
</dbReference>
<dbReference type="CCDS" id="CCDS44091.1">
    <molecule id="O14497-2"/>
</dbReference>
<dbReference type="PIR" id="T00022">
    <property type="entry name" value="T00022"/>
</dbReference>
<dbReference type="RefSeq" id="NP_006006.3">
    <molecule id="O14497-1"/>
    <property type="nucleotide sequence ID" value="NM_006015.4"/>
</dbReference>
<dbReference type="RefSeq" id="NP_624361.1">
    <molecule id="O14497-2"/>
    <property type="nucleotide sequence ID" value="NM_139135.4"/>
</dbReference>
<dbReference type="PDB" id="1RYU">
    <property type="method" value="NMR"/>
    <property type="chains" value="A=1000-1119"/>
</dbReference>
<dbReference type="PDB" id="6LTH">
    <property type="method" value="EM"/>
    <property type="resolution" value="3.00 A"/>
    <property type="chains" value="L=1-2285"/>
</dbReference>
<dbReference type="PDB" id="6LTJ">
    <property type="method" value="EM"/>
    <property type="resolution" value="3.70 A"/>
    <property type="chains" value="L=991-2285"/>
</dbReference>
<dbReference type="PDBsum" id="1RYU"/>
<dbReference type="PDBsum" id="6LTH"/>
<dbReference type="PDBsum" id="6LTJ"/>
<dbReference type="BMRB" id="O14497"/>
<dbReference type="EMDB" id="EMD-0974"/>
<dbReference type="SMR" id="O14497"/>
<dbReference type="BioGRID" id="113894">
    <property type="interactions" value="260"/>
</dbReference>
<dbReference type="ComplexPortal" id="CPX-1164">
    <property type="entry name" value="SWI/SNF ATP-dependent chromatin remodeling complex, ACTL6A-ARID1A-SMARCA2 variant"/>
</dbReference>
<dbReference type="ComplexPortal" id="CPX-1194">
    <property type="entry name" value="Muscle cell-specific SWI/SNF ATP-dependent chromatin remodeling complex, ACTL6A-ARID1A-SMARCA2 variant"/>
</dbReference>
<dbReference type="ComplexPortal" id="CPX-1195">
    <property type="entry name" value="Embryonic stem cell-specific SWI/SNF ATP-dependent chromatin remodeling complex"/>
</dbReference>
<dbReference type="ComplexPortal" id="CPX-1201">
    <property type="entry name" value="Neural progenitor-specific SWI/SNF ATP-dependent chromatin remodeling complex, ARID1A-SMARCA2 variant"/>
</dbReference>
<dbReference type="ComplexPortal" id="CPX-1202">
    <property type="entry name" value="Neuron-specific SWI/SNF ATP-dependent chromatin remodeling complex, ARID1A-SMARCA2 variant"/>
</dbReference>
<dbReference type="ComplexPortal" id="CPX-1203">
    <property type="entry name" value="Brain-specific SWI/SNF ATP-dependent chromatin remodeling complex, ARID1A-SMARCA2 variant"/>
</dbReference>
<dbReference type="ComplexPortal" id="CPX-1204">
    <property type="entry name" value="SWI/SNF ATP-dependent chromatin remodeling complex, ACTL6A-ARID1A-SMARCA4 variant"/>
</dbReference>
<dbReference type="ComplexPortal" id="CPX-1207">
    <property type="entry name" value="SWI/SNF ATP-dependent chromatin remodeling complex, ACTL6B-ARID1A-SMARCA2 variant"/>
</dbReference>
<dbReference type="ComplexPortal" id="CPX-1209">
    <property type="entry name" value="SWI/SNF ATP-dependent chromatin remodeling complex, ACTL6B-ARID1A-SMARCA4 variant"/>
</dbReference>
<dbReference type="ComplexPortal" id="CPX-1212">
    <property type="entry name" value="Neural progenitor-specific SWI/SNF ATP-dependent chromatin remodeling complex, ARID1A-SMARCA4 variant"/>
</dbReference>
<dbReference type="ComplexPortal" id="CPX-1216">
    <property type="entry name" value="Neuron-specific SWI/SNF ATP-dependent chromatin remodeling complex, ARID1A-SMARCA4 variant"/>
</dbReference>
<dbReference type="ComplexPortal" id="CPX-1219">
    <property type="entry name" value="Brain-specific SWI/SNF ATP-dependent chromatin remodeling complex, ARID1A-SMARCA4 variant"/>
</dbReference>
<dbReference type="ComplexPortal" id="CPX-1222">
    <property type="entry name" value="Muscle cell-specific SWI/SNF ATP-dependent chromatin remodeling complex, ACTL6A-ARID1A-SMARCA4 variant"/>
</dbReference>
<dbReference type="ComplexPortal" id="CPX-1225">
    <property type="entry name" value="Muscle cell-specific SWI/SNF ATP-dependent chromatin remodeling complex, ACTL6B-ARID1A-SMARCA2 variant"/>
</dbReference>
<dbReference type="ComplexPortal" id="CPX-1226">
    <property type="entry name" value="Muscle cell-specific SWI/SNF ATP-dependent chromatin remodeling complex, ACTL6B-ARID1A-SMARCA4 variant"/>
</dbReference>
<dbReference type="CORUM" id="O14497"/>
<dbReference type="DIP" id="DIP-33016N"/>
<dbReference type="FunCoup" id="O14497">
    <property type="interactions" value="3984"/>
</dbReference>
<dbReference type="IntAct" id="O14497">
    <property type="interactions" value="114"/>
</dbReference>
<dbReference type="MINT" id="O14497"/>
<dbReference type="STRING" id="9606.ENSP00000320485"/>
<dbReference type="GlyCosmos" id="O14497">
    <property type="glycosylation" value="19 sites, 2 glycans"/>
</dbReference>
<dbReference type="GlyGen" id="O14497">
    <property type="glycosylation" value="26 sites, 2 O-linked glycans (25 sites)"/>
</dbReference>
<dbReference type="iPTMnet" id="O14497"/>
<dbReference type="MetOSite" id="O14497"/>
<dbReference type="PhosphoSitePlus" id="O14497"/>
<dbReference type="SwissPalm" id="O14497"/>
<dbReference type="BioMuta" id="ARID1A"/>
<dbReference type="jPOST" id="O14497"/>
<dbReference type="MassIVE" id="O14497"/>
<dbReference type="PaxDb" id="9606-ENSP00000320485"/>
<dbReference type="PeptideAtlas" id="O14497"/>
<dbReference type="ProteomicsDB" id="48041">
    <molecule id="O14497-1"/>
</dbReference>
<dbReference type="ProteomicsDB" id="48042">
    <molecule id="O14497-2"/>
</dbReference>
<dbReference type="ProteomicsDB" id="48043">
    <molecule id="O14497-3"/>
</dbReference>
<dbReference type="Pumba" id="O14497"/>
<dbReference type="Antibodypedia" id="1691">
    <property type="antibodies" value="250 antibodies from 34 providers"/>
</dbReference>
<dbReference type="DNASU" id="8289"/>
<dbReference type="Ensembl" id="ENST00000324856.13">
    <molecule id="O14497-1"/>
    <property type="protein sequence ID" value="ENSP00000320485.7"/>
    <property type="gene ID" value="ENSG00000117713.21"/>
</dbReference>
<dbReference type="Ensembl" id="ENST00000374152.7">
    <molecule id="O14497-3"/>
    <property type="protein sequence ID" value="ENSP00000363267.2"/>
    <property type="gene ID" value="ENSG00000117713.21"/>
</dbReference>
<dbReference type="Ensembl" id="ENST00000457599.7">
    <molecule id="O14497-2"/>
    <property type="protein sequence ID" value="ENSP00000387636.2"/>
    <property type="gene ID" value="ENSG00000117713.21"/>
</dbReference>
<dbReference type="GeneID" id="8289"/>
<dbReference type="KEGG" id="hsa:8289"/>
<dbReference type="MANE-Select" id="ENST00000324856.13">
    <property type="protein sequence ID" value="ENSP00000320485.7"/>
    <property type="RefSeq nucleotide sequence ID" value="NM_006015.6"/>
    <property type="RefSeq protein sequence ID" value="NP_006006.3"/>
</dbReference>
<dbReference type="UCSC" id="uc001bmu.2">
    <molecule id="O14497-1"/>
    <property type="organism name" value="human"/>
</dbReference>
<dbReference type="AGR" id="HGNC:11110"/>
<dbReference type="CTD" id="8289"/>
<dbReference type="DisGeNET" id="8289"/>
<dbReference type="GeneCards" id="ARID1A"/>
<dbReference type="GeneReviews" id="ARID1A"/>
<dbReference type="HGNC" id="HGNC:11110">
    <property type="gene designation" value="ARID1A"/>
</dbReference>
<dbReference type="HPA" id="ENSG00000117713">
    <property type="expression patterns" value="Low tissue specificity"/>
</dbReference>
<dbReference type="MalaCards" id="ARID1A"/>
<dbReference type="MIM" id="603024">
    <property type="type" value="gene"/>
</dbReference>
<dbReference type="MIM" id="614607">
    <property type="type" value="phenotype"/>
</dbReference>
<dbReference type="neXtProt" id="NX_O14497"/>
<dbReference type="OpenTargets" id="ENSG00000117713"/>
<dbReference type="Orphanet" id="1465">
    <property type="disease" value="Coffin-Siris syndrome"/>
</dbReference>
<dbReference type="PharmGKB" id="PA35960"/>
<dbReference type="VEuPathDB" id="HostDB:ENSG00000117713"/>
<dbReference type="eggNOG" id="KOG2510">
    <property type="taxonomic scope" value="Eukaryota"/>
</dbReference>
<dbReference type="GeneTree" id="ENSGT00940000155194"/>
<dbReference type="HOGENOM" id="CLU_000974_1_1_1"/>
<dbReference type="InParanoid" id="O14497"/>
<dbReference type="OMA" id="CRPIDMD"/>
<dbReference type="OrthoDB" id="8709537at2759"/>
<dbReference type="PAN-GO" id="O14497">
    <property type="GO annotations" value="6 GO annotations based on evolutionary models"/>
</dbReference>
<dbReference type="PhylomeDB" id="O14497"/>
<dbReference type="TreeFam" id="TF320364"/>
<dbReference type="PathwayCommons" id="O14497"/>
<dbReference type="Reactome" id="R-HSA-3214858">
    <property type="pathway name" value="RMTs methylate histone arginines"/>
</dbReference>
<dbReference type="Reactome" id="R-HSA-8939243">
    <property type="pathway name" value="RUNX1 interacts with co-factors whose precise effect on RUNX1 targets is not known"/>
</dbReference>
<dbReference type="Reactome" id="R-HSA-9824585">
    <property type="pathway name" value="Regulation of MITF-M-dependent genes involved in pigmentation"/>
</dbReference>
<dbReference type="Reactome" id="R-HSA-9845323">
    <property type="pathway name" value="Regulation of endogenous retroelements by Piwi-interacting RNAs (piRNAs)"/>
</dbReference>
<dbReference type="SignaLink" id="O14497"/>
<dbReference type="SIGNOR" id="O14497"/>
<dbReference type="BioGRID-ORCS" id="8289">
    <property type="hits" value="177 hits in 1228 CRISPR screens"/>
</dbReference>
<dbReference type="CD-CODE" id="4749EA78">
    <property type="entry name" value="cBAF condensate"/>
</dbReference>
<dbReference type="ChiTaRS" id="ARID1A">
    <property type="organism name" value="human"/>
</dbReference>
<dbReference type="EvolutionaryTrace" id="O14497"/>
<dbReference type="GeneWiki" id="ARID1A"/>
<dbReference type="GenomeRNAi" id="8289"/>
<dbReference type="Pharos" id="O14497">
    <property type="development level" value="Tbio"/>
</dbReference>
<dbReference type="PRO" id="PR:O14497"/>
<dbReference type="Proteomes" id="UP000005640">
    <property type="component" value="Chromosome 1"/>
</dbReference>
<dbReference type="RNAct" id="O14497">
    <property type="molecule type" value="protein"/>
</dbReference>
<dbReference type="Bgee" id="ENSG00000117713">
    <property type="expression patterns" value="Expressed in bone marrow cell and 207 other cell types or tissues"/>
</dbReference>
<dbReference type="ExpressionAtlas" id="O14497">
    <property type="expression patterns" value="baseline and differential"/>
</dbReference>
<dbReference type="GO" id="GO:0140092">
    <property type="term" value="C:bBAF complex"/>
    <property type="evidence" value="ECO:0000303"/>
    <property type="project" value="ComplexPortal"/>
</dbReference>
<dbReference type="GO" id="GO:0035060">
    <property type="term" value="C:brahma complex"/>
    <property type="evidence" value="ECO:0000303"/>
    <property type="project" value="ComplexPortal"/>
</dbReference>
<dbReference type="GO" id="GO:0000785">
    <property type="term" value="C:chromatin"/>
    <property type="evidence" value="ECO:0000314"/>
    <property type="project" value="BHF-UCL"/>
</dbReference>
<dbReference type="GO" id="GO:0071565">
    <property type="term" value="C:nBAF complex"/>
    <property type="evidence" value="ECO:0000250"/>
    <property type="project" value="UniProtKB"/>
</dbReference>
<dbReference type="GO" id="GO:0071564">
    <property type="term" value="C:npBAF complex"/>
    <property type="evidence" value="ECO:0000250"/>
    <property type="project" value="UniProtKB"/>
</dbReference>
<dbReference type="GO" id="GO:0005654">
    <property type="term" value="C:nucleoplasm"/>
    <property type="evidence" value="ECO:0000314"/>
    <property type="project" value="HPA"/>
</dbReference>
<dbReference type="GO" id="GO:0005634">
    <property type="term" value="C:nucleus"/>
    <property type="evidence" value="ECO:0000304"/>
    <property type="project" value="UniProtKB"/>
</dbReference>
<dbReference type="GO" id="GO:0016514">
    <property type="term" value="C:SWI/SNF complex"/>
    <property type="evidence" value="ECO:0000314"/>
    <property type="project" value="UniProtKB"/>
</dbReference>
<dbReference type="GO" id="GO:0003677">
    <property type="term" value="F:DNA binding"/>
    <property type="evidence" value="ECO:0000314"/>
    <property type="project" value="MGI"/>
</dbReference>
<dbReference type="GO" id="GO:0016922">
    <property type="term" value="F:nuclear receptor binding"/>
    <property type="evidence" value="ECO:0000353"/>
    <property type="project" value="BHF-UCL"/>
</dbReference>
<dbReference type="GO" id="GO:0003713">
    <property type="term" value="F:transcription coactivator activity"/>
    <property type="evidence" value="ECO:0000314"/>
    <property type="project" value="GO_Central"/>
</dbReference>
<dbReference type="GO" id="GO:0006338">
    <property type="term" value="P:chromatin remodeling"/>
    <property type="evidence" value="ECO:0000314"/>
    <property type="project" value="BHF-UCL"/>
</dbReference>
<dbReference type="GO" id="GO:0007399">
    <property type="term" value="P:nervous system development"/>
    <property type="evidence" value="ECO:0007669"/>
    <property type="project" value="UniProtKB-KW"/>
</dbReference>
<dbReference type="GO" id="GO:0006337">
    <property type="term" value="P:nucleosome disassembly"/>
    <property type="evidence" value="ECO:0000314"/>
    <property type="project" value="BHF-UCL"/>
</dbReference>
<dbReference type="GO" id="GO:0045597">
    <property type="term" value="P:positive regulation of cell differentiation"/>
    <property type="evidence" value="ECO:0000303"/>
    <property type="project" value="ComplexPortal"/>
</dbReference>
<dbReference type="GO" id="GO:0045893">
    <property type="term" value="P:positive regulation of DNA-templated transcription"/>
    <property type="evidence" value="ECO:0000314"/>
    <property type="project" value="UniProtKB"/>
</dbReference>
<dbReference type="GO" id="GO:2000781">
    <property type="term" value="P:positive regulation of double-strand break repair"/>
    <property type="evidence" value="ECO:0000303"/>
    <property type="project" value="ComplexPortal"/>
</dbReference>
<dbReference type="GO" id="GO:0045663">
    <property type="term" value="P:positive regulation of myoblast differentiation"/>
    <property type="evidence" value="ECO:0000303"/>
    <property type="project" value="ComplexPortal"/>
</dbReference>
<dbReference type="GO" id="GO:1902459">
    <property type="term" value="P:positive regulation of stem cell population maintenance"/>
    <property type="evidence" value="ECO:0000303"/>
    <property type="project" value="ComplexPortal"/>
</dbReference>
<dbReference type="GO" id="GO:0045582">
    <property type="term" value="P:positive regulation of T cell differentiation"/>
    <property type="evidence" value="ECO:0000303"/>
    <property type="project" value="ComplexPortal"/>
</dbReference>
<dbReference type="GO" id="GO:0070316">
    <property type="term" value="P:regulation of G0 to G1 transition"/>
    <property type="evidence" value="ECO:0000303"/>
    <property type="project" value="ComplexPortal"/>
</dbReference>
<dbReference type="GO" id="GO:2000045">
    <property type="term" value="P:regulation of G1/S transition of mitotic cell cycle"/>
    <property type="evidence" value="ECO:0000303"/>
    <property type="project" value="ComplexPortal"/>
</dbReference>
<dbReference type="GO" id="GO:0030071">
    <property type="term" value="P:regulation of mitotic metaphase/anaphase transition"/>
    <property type="evidence" value="ECO:0000303"/>
    <property type="project" value="ComplexPortal"/>
</dbReference>
<dbReference type="GO" id="GO:2000819">
    <property type="term" value="P:regulation of nucleotide-excision repair"/>
    <property type="evidence" value="ECO:0000303"/>
    <property type="project" value="ComplexPortal"/>
</dbReference>
<dbReference type="GO" id="GO:0006357">
    <property type="term" value="P:regulation of transcription by RNA polymerase II"/>
    <property type="evidence" value="ECO:0000318"/>
    <property type="project" value="GO_Central"/>
</dbReference>
<dbReference type="GO" id="GO:0045815">
    <property type="term" value="P:transcription initiation-coupled chromatin remodeling"/>
    <property type="evidence" value="ECO:0000304"/>
    <property type="project" value="UniProtKB"/>
</dbReference>
<dbReference type="CDD" id="cd16876">
    <property type="entry name" value="ARID_ARID1A"/>
    <property type="match status" value="1"/>
</dbReference>
<dbReference type="FunFam" id="1.10.150.60:FF:000002">
    <property type="entry name" value="AT-rich interactive domain-containing protein 1B"/>
    <property type="match status" value="1"/>
</dbReference>
<dbReference type="Gene3D" id="1.10.150.60">
    <property type="entry name" value="ARID DNA-binding domain"/>
    <property type="match status" value="1"/>
</dbReference>
<dbReference type="Gene3D" id="1.25.10.10">
    <property type="entry name" value="Leucine-rich Repeat Variant"/>
    <property type="match status" value="1"/>
</dbReference>
<dbReference type="InterPro" id="IPR030094">
    <property type="entry name" value="ARID1A_ARID_BRIGHT_DNA-bd"/>
</dbReference>
<dbReference type="InterPro" id="IPR001606">
    <property type="entry name" value="ARID_dom"/>
</dbReference>
<dbReference type="InterPro" id="IPR036431">
    <property type="entry name" value="ARID_dom_sf"/>
</dbReference>
<dbReference type="InterPro" id="IPR011989">
    <property type="entry name" value="ARM-like"/>
</dbReference>
<dbReference type="InterPro" id="IPR016024">
    <property type="entry name" value="ARM-type_fold"/>
</dbReference>
<dbReference type="InterPro" id="IPR021906">
    <property type="entry name" value="BAF250/Osa"/>
</dbReference>
<dbReference type="InterPro" id="IPR033388">
    <property type="entry name" value="BAF250_C"/>
</dbReference>
<dbReference type="PANTHER" id="PTHR12656:SF12">
    <property type="entry name" value="AT-RICH INTERACTIVE DOMAIN-CONTAINING PROTEIN 1A"/>
    <property type="match status" value="1"/>
</dbReference>
<dbReference type="PANTHER" id="PTHR12656">
    <property type="entry name" value="BRG-1 ASSOCIATED FACTOR 250 BAF250"/>
    <property type="match status" value="1"/>
</dbReference>
<dbReference type="Pfam" id="PF01388">
    <property type="entry name" value="ARID"/>
    <property type="match status" value="1"/>
</dbReference>
<dbReference type="Pfam" id="PF12031">
    <property type="entry name" value="BAF250_C"/>
    <property type="match status" value="1"/>
</dbReference>
<dbReference type="SMART" id="SM01014">
    <property type="entry name" value="ARID"/>
    <property type="match status" value="1"/>
</dbReference>
<dbReference type="SMART" id="SM00501">
    <property type="entry name" value="BRIGHT"/>
    <property type="match status" value="1"/>
</dbReference>
<dbReference type="SUPFAM" id="SSF46774">
    <property type="entry name" value="ARID-like"/>
    <property type="match status" value="1"/>
</dbReference>
<dbReference type="SUPFAM" id="SSF48371">
    <property type="entry name" value="ARM repeat"/>
    <property type="match status" value="1"/>
</dbReference>
<dbReference type="PROSITE" id="PS51011">
    <property type="entry name" value="ARID"/>
    <property type="match status" value="1"/>
</dbReference>
<protein>
    <recommendedName>
        <fullName>AT-rich interactive domain-containing protein 1A</fullName>
        <shortName>ARID domain-containing protein 1A</shortName>
    </recommendedName>
    <alternativeName>
        <fullName>B120</fullName>
    </alternativeName>
    <alternativeName>
        <fullName>BRG1-associated factor 250</fullName>
        <shortName>BAF250</shortName>
    </alternativeName>
    <alternativeName>
        <fullName>BRG1-associated factor 250a</fullName>
        <shortName>BAF250A</shortName>
    </alternativeName>
    <alternativeName>
        <fullName>Osa homolog 1</fullName>
        <shortName>hOSA1</shortName>
    </alternativeName>
    <alternativeName>
        <fullName>SWI-like protein</fullName>
    </alternativeName>
    <alternativeName>
        <fullName>SWI/SNF complex protein p270</fullName>
    </alternativeName>
    <alternativeName>
        <fullName>SWI/SNF-related, matrix-associated, actin-dependent regulator of chromatin subfamily F member 1</fullName>
    </alternativeName>
    <alternativeName>
        <fullName>hELD</fullName>
    </alternativeName>
</protein>
<feature type="initiator methionine" description="Removed" evidence="30 35">
    <location>
        <position position="1"/>
    </location>
</feature>
<feature type="chain" id="PRO_0000200575" description="AT-rich interactive domain-containing protein 1A">
    <location>
        <begin position="2"/>
        <end position="2285"/>
    </location>
</feature>
<feature type="domain" description="ARID" evidence="2">
    <location>
        <begin position="1017"/>
        <end position="1108"/>
    </location>
</feature>
<feature type="region of interest" description="Disordered" evidence="3">
    <location>
        <begin position="1"/>
        <end position="820"/>
    </location>
</feature>
<feature type="region of interest" description="Disordered" evidence="3">
    <location>
        <begin position="978"/>
        <end position="1005"/>
    </location>
</feature>
<feature type="region of interest" description="Disordered" evidence="3">
    <location>
        <begin position="1113"/>
        <end position="1483"/>
    </location>
</feature>
<feature type="region of interest" description="Disordered" evidence="3">
    <location>
        <begin position="1539"/>
        <end position="1603"/>
    </location>
</feature>
<feature type="region of interest" description="Disordered" evidence="3">
    <location>
        <begin position="1747"/>
        <end position="1774"/>
    </location>
</feature>
<feature type="region of interest" description="Disordered" evidence="3">
    <location>
        <begin position="1859"/>
        <end position="1907"/>
    </location>
</feature>
<feature type="short sequence motif" description="LXXLL">
    <location>
        <begin position="295"/>
        <end position="299"/>
    </location>
</feature>
<feature type="short sequence motif" description="Nuclear localization signal" evidence="18">
    <location>
        <begin position="1368"/>
        <end position="1387"/>
    </location>
</feature>
<feature type="short sequence motif" description="LXXLL">
    <location>
        <begin position="1709"/>
        <end position="1713"/>
    </location>
</feature>
<feature type="short sequence motif" description="LXXLL">
    <location>
        <begin position="1967"/>
        <end position="1971"/>
    </location>
</feature>
<feature type="short sequence motif" description="LXXLL">
    <location>
        <begin position="2085"/>
        <end position="2089"/>
    </location>
</feature>
<feature type="compositionally biased region" description="Low complexity" evidence="3">
    <location>
        <begin position="1"/>
        <end position="14"/>
    </location>
</feature>
<feature type="compositionally biased region" description="Basic and acidic residues" evidence="3">
    <location>
        <begin position="23"/>
        <end position="35"/>
    </location>
</feature>
<feature type="compositionally biased region" description="Gly residues" evidence="3">
    <location>
        <begin position="79"/>
        <end position="95"/>
    </location>
</feature>
<feature type="compositionally biased region" description="Gly residues" evidence="3">
    <location>
        <begin position="121"/>
        <end position="130"/>
    </location>
</feature>
<feature type="compositionally biased region" description="Low complexity" evidence="3">
    <location>
        <begin position="131"/>
        <end position="142"/>
    </location>
</feature>
<feature type="compositionally biased region" description="Low complexity" evidence="3">
    <location>
        <begin position="212"/>
        <end position="221"/>
    </location>
</feature>
<feature type="compositionally biased region" description="Low complexity" evidence="3">
    <location>
        <begin position="228"/>
        <end position="265"/>
    </location>
</feature>
<feature type="compositionally biased region" description="Gly residues" evidence="3">
    <location>
        <begin position="273"/>
        <end position="286"/>
    </location>
</feature>
<feature type="compositionally biased region" description="Polar residues" evidence="3">
    <location>
        <begin position="295"/>
        <end position="306"/>
    </location>
</feature>
<feature type="compositionally biased region" description="Gly residues" evidence="3">
    <location>
        <begin position="310"/>
        <end position="327"/>
    </location>
</feature>
<feature type="compositionally biased region" description="Low complexity" evidence="3">
    <location>
        <begin position="338"/>
        <end position="353"/>
    </location>
</feature>
<feature type="compositionally biased region" description="Low complexity" evidence="3">
    <location>
        <begin position="400"/>
        <end position="425"/>
    </location>
</feature>
<feature type="compositionally biased region" description="Low complexity" evidence="3">
    <location>
        <begin position="447"/>
        <end position="457"/>
    </location>
</feature>
<feature type="compositionally biased region" description="Low complexity" evidence="3">
    <location>
        <begin position="465"/>
        <end position="546"/>
    </location>
</feature>
<feature type="compositionally biased region" description="Low complexity" evidence="3">
    <location>
        <begin position="553"/>
        <end position="595"/>
    </location>
</feature>
<feature type="compositionally biased region" description="Low complexity" evidence="3">
    <location>
        <begin position="610"/>
        <end position="621"/>
    </location>
</feature>
<feature type="compositionally biased region" description="Polar residues" evidence="3">
    <location>
        <begin position="628"/>
        <end position="637"/>
    </location>
</feature>
<feature type="compositionally biased region" description="Low complexity" evidence="3">
    <location>
        <begin position="658"/>
        <end position="674"/>
    </location>
</feature>
<feature type="compositionally biased region" description="Polar residues" evidence="3">
    <location>
        <begin position="675"/>
        <end position="685"/>
    </location>
</feature>
<feature type="compositionally biased region" description="Polar residues" evidence="3">
    <location>
        <begin position="730"/>
        <end position="747"/>
    </location>
</feature>
<feature type="compositionally biased region" description="Polar residues" evidence="3">
    <location>
        <begin position="755"/>
        <end position="793"/>
    </location>
</feature>
<feature type="compositionally biased region" description="Gly residues" evidence="3">
    <location>
        <begin position="797"/>
        <end position="807"/>
    </location>
</feature>
<feature type="compositionally biased region" description="Low complexity" evidence="3">
    <location>
        <begin position="808"/>
        <end position="820"/>
    </location>
</feature>
<feature type="compositionally biased region" description="Low complexity" evidence="3">
    <location>
        <begin position="1141"/>
        <end position="1154"/>
    </location>
</feature>
<feature type="compositionally biased region" description="Pro residues" evidence="3">
    <location>
        <begin position="1162"/>
        <end position="1177"/>
    </location>
</feature>
<feature type="compositionally biased region" description="Polar residues" evidence="3">
    <location>
        <begin position="1194"/>
        <end position="1219"/>
    </location>
</feature>
<feature type="compositionally biased region" description="Polar residues" evidence="3">
    <location>
        <begin position="1299"/>
        <end position="1315"/>
    </location>
</feature>
<feature type="compositionally biased region" description="Polar residues" evidence="3">
    <location>
        <begin position="1339"/>
        <end position="1356"/>
    </location>
</feature>
<feature type="compositionally biased region" description="Low complexity" evidence="3">
    <location>
        <begin position="1357"/>
        <end position="1367"/>
    </location>
</feature>
<feature type="compositionally biased region" description="Low complexity" evidence="3">
    <location>
        <begin position="1396"/>
        <end position="1425"/>
    </location>
</feature>
<feature type="compositionally biased region" description="Polar residues" evidence="3">
    <location>
        <begin position="1468"/>
        <end position="1477"/>
    </location>
</feature>
<feature type="compositionally biased region" description="Pro residues" evidence="3">
    <location>
        <begin position="1554"/>
        <end position="1577"/>
    </location>
</feature>
<feature type="compositionally biased region" description="Acidic residues" evidence="3">
    <location>
        <begin position="1761"/>
        <end position="1774"/>
    </location>
</feature>
<feature type="compositionally biased region" description="Low complexity" evidence="3">
    <location>
        <begin position="1886"/>
        <end position="1895"/>
    </location>
</feature>
<feature type="modified residue" description="N-acetylalanine" evidence="30 35">
    <location>
        <position position="2"/>
    </location>
</feature>
<feature type="modified residue" description="Phosphoserine" evidence="36">
    <location>
        <position position="58"/>
    </location>
</feature>
<feature type="modified residue" description="Phosphoserine" evidence="32">
    <location>
        <position position="79"/>
    </location>
</feature>
<feature type="modified residue" description="Phosphoserine" evidence="36">
    <location>
        <position position="233"/>
    </location>
</feature>
<feature type="modified residue" description="Phosphothreonine" evidence="29 32">
    <location>
        <position position="286"/>
    </location>
</feature>
<feature type="modified residue" description="Phosphoserine" evidence="29">
    <location>
        <position position="301"/>
    </location>
</feature>
<feature type="modified residue" description="Phosphoserine" evidence="27 32 34 36 38">
    <location>
        <position position="363"/>
    </location>
</feature>
<feature type="modified residue" description="Phosphoserine" evidence="36">
    <location>
        <position position="382"/>
    </location>
</feature>
<feature type="modified residue" description="Asymmetric dimethylarginine" evidence="37">
    <location>
        <position position="429"/>
    </location>
</feature>
<feature type="modified residue" description="Phosphoserine" evidence="32 36">
    <location>
        <position position="604"/>
    </location>
</feature>
<feature type="modified residue" description="Phosphoserine" evidence="26 29 32 34 36 38">
    <location>
        <position position="696"/>
    </location>
</feature>
<feature type="modified residue" description="Phosphoserine" evidence="26 29 32 36">
    <location>
        <position position="698"/>
    </location>
</feature>
<feature type="modified residue" description="Phosphoserine" evidence="26 32 34 36">
    <location>
        <position position="702"/>
    </location>
</feature>
<feature type="modified residue" description="Phosphoserine" evidence="1">
    <location>
        <position position="730"/>
    </location>
</feature>
<feature type="modified residue" description="Phosphoserine" evidence="29 36">
    <location>
        <position position="764"/>
    </location>
</feature>
<feature type="modified residue" description="Phosphoserine" evidence="28 29 32 33 36">
    <location>
        <position position="772"/>
    </location>
</feature>
<feature type="modified residue" description="Phosphoserine" evidence="32 36">
    <location>
        <position position="1184"/>
    </location>
</feature>
<feature type="modified residue" description="Phosphoserine" evidence="36">
    <location>
        <position position="1235"/>
    </location>
</feature>
<feature type="modified residue" description="Omega-N-methylarginine" evidence="37">
    <location>
        <position position="1276"/>
    </location>
</feature>
<feature type="modified residue" description="Phosphoserine" evidence="34 36">
    <location>
        <position position="1604"/>
    </location>
</feature>
<feature type="modified residue" description="N6-acetyllysine" evidence="31">
    <location>
        <position position="1612"/>
    </location>
</feature>
<feature type="modified residue" description="Phosphoserine" evidence="36 38">
    <location>
        <position position="1751"/>
    </location>
</feature>
<feature type="modified residue" description="Phosphoserine" evidence="36">
    <location>
        <position position="1754"/>
    </location>
</feature>
<feature type="modified residue" description="Phosphothreonine" evidence="36">
    <location>
        <position position="1888"/>
    </location>
</feature>
<feature type="modified residue" description="N6-acetyllysine" evidence="31">
    <location>
        <position position="1905"/>
    </location>
</feature>
<feature type="modified residue" description="Phosphoserine" evidence="36">
    <location>
        <position position="1929"/>
    </location>
</feature>
<feature type="modified residue" description="Phosphoserine" evidence="29 36">
    <location>
        <position position="1944"/>
    </location>
</feature>
<feature type="splice variant" id="VSP_037157" description="In isoform 3." evidence="24">
    <location>
        <begin position="1"/>
        <end position="383"/>
    </location>
</feature>
<feature type="splice variant" id="VSP_015225" description="In isoform 2." evidence="20">
    <location>
        <begin position="1367"/>
        <end position="1583"/>
    </location>
</feature>
<feature type="sequence variant" id="VAR_076938" description="In dbSNP:rs571264557." evidence="17">
    <original>P</original>
    <variation>S</variation>
    <location>
        <position position="120"/>
    </location>
</feature>
<feature type="sequence variant" id="VAR_064695" description="Found in a clear cell renal carcinoma; somatic mutation; dbSNP:rs2081052478." evidence="14">
    <original>R</original>
    <variation>K</variation>
    <location>
        <position position="1020"/>
    </location>
</feature>
<feature type="sequence variant" id="VAR_068021" description="Found in a gastric cancer sample; somatic mutation; dbSNP:rs1442666063." evidence="15">
    <original>R</original>
    <variation>W</variation>
    <location>
        <position position="1658"/>
    </location>
</feature>
<feature type="sequence variant" id="VAR_068022" description="Found in a breast cancer sample; somatic mutation; dbSNP:rs139230162." evidence="15">
    <original>I</original>
    <variation>F</variation>
    <location>
        <position position="1907"/>
    </location>
</feature>
<feature type="sequence variant" id="VAR_068023" description="Found in a breast cancer sample; somatic mutation; dbSNP:rs1553153748." evidence="15">
    <original>G</original>
    <variation>R</variation>
    <location>
        <position position="2087"/>
    </location>
</feature>
<feature type="sequence variant" id="VAR_064696" description="Found in a clear cell renal carcinoma case; somatic mutation; dbSNP:rs2124147323." evidence="14">
    <original>L</original>
    <variation>P</variation>
    <location>
        <position position="2089"/>
    </location>
</feature>
<feature type="mutagenesis site" description="Partial loss of DNA-binding activity. Complete loss of activity; when associated with A-1096." evidence="4">
    <original>W</original>
    <variation>A</variation>
    <location>
        <position position="1073"/>
    </location>
</feature>
<feature type="mutagenesis site" description="Partial loss of DNA-binding activity. Complete loss of activity; when associated with A-1073." evidence="4">
    <original>Y</original>
    <variation>A</variation>
    <location>
        <position position="1096"/>
    </location>
</feature>
<feature type="mutagenesis site" description="Displays nucleocytoplasmic localization and increased stability; when associated with T-1383." evidence="18">
    <original>KR</original>
    <variation>TT</variation>
    <location>
        <begin position="1370"/>
        <end position="1371"/>
    </location>
</feature>
<feature type="mutagenesis site" description="Displays nucleocytoplasmic localization and increased stability; when associated with 1370-T-T-1371." evidence="18">
    <original>R</original>
    <variation>T</variation>
    <location>
        <position position="1383"/>
    </location>
</feature>
<feature type="mutagenesis site" description="No effect on subcellular localization." evidence="18">
    <original>RRR</original>
    <variation>TTT</variation>
    <location>
        <begin position="1656"/>
        <end position="1658"/>
    </location>
</feature>
<feature type="sequence conflict" description="In Ref. 1; AAG33967, 7; BAA23269 and 8; BAA83073." evidence="25" ref="1 7 8">
    <original>G</original>
    <variation>D</variation>
    <location>
        <position position="410"/>
    </location>
</feature>
<feature type="sequence conflict" description="In Ref. 1; AAG33967, 7; BAA23269 and 8; BAA83073." evidence="25" ref="1 7 8">
    <original>M</original>
    <variation>V</variation>
    <location>
        <position position="434"/>
    </location>
</feature>
<feature type="sequence conflict" description="In Ref. 9; AAK54505." evidence="25" ref="9">
    <original>P</original>
    <variation>T</variation>
    <location>
        <position position="636"/>
    </location>
</feature>
<feature type="sequence conflict" description="In Ref. 1; AAG33967, 5; AAG17549 and 7; BAA23269." evidence="25" ref="1 5 7">
    <original>Q</original>
    <variation>S</variation>
    <location>
        <position position="732"/>
    </location>
</feature>
<feature type="sequence conflict" description="In Ref. 8; BAA83073." evidence="25" ref="8">
    <original>R</original>
    <variation>RG</variation>
    <location>
        <position position="750"/>
    </location>
</feature>
<feature type="sequence conflict" description="In Ref. 1; AAG33967, 5; AAG17549 and 7; BAA23269." evidence="25" ref="1 5 7">
    <original>P</original>
    <variation>S</variation>
    <location>
        <position position="757"/>
    </location>
</feature>
<feature type="sequence conflict" description="In Ref. 1; AAG33967, 5; AAG17549 and 7; BAA23269." evidence="25" ref="1 5 7">
    <original>P</original>
    <variation>L</variation>
    <location>
        <position position="776"/>
    </location>
</feature>
<feature type="sequence conflict" description="In Ref. 9; AAK54505." evidence="25" ref="9">
    <original>M</original>
    <variation>V</variation>
    <location>
        <position position="858"/>
    </location>
</feature>
<feature type="sequence conflict" description="In Ref. 7; BAA23269." evidence="25" ref="7">
    <original>N</original>
    <variation>T</variation>
    <location>
        <position position="871"/>
    </location>
</feature>
<feature type="sequence conflict" description="In Ref. 9; AAK54505." evidence="25" ref="9">
    <original>M</original>
    <variation>I</variation>
    <location>
        <position position="875"/>
    </location>
</feature>
<feature type="sequence conflict" description="In Ref. 1; AAG33967, 5; AAG17549 and 7; BAA23269." evidence="25" ref="1 5 7">
    <original>E</original>
    <variation>G</variation>
    <location>
        <position position="1017"/>
    </location>
</feature>
<feature type="sequence conflict" description="In Ref. 10; BAD96995." evidence="25" ref="10">
    <location>
        <position position="1180"/>
    </location>
</feature>
<feature type="sequence conflict" description="In Ref. 1; AAG33967, 5; AAG17549 and 7; BAA23269." evidence="25" ref="1 5 7">
    <original>P</original>
    <variation>S</variation>
    <location>
        <position position="1307"/>
    </location>
</feature>
<feature type="sequence conflict" description="In Ref. 5; AAG17549." evidence="25" ref="5">
    <original>Y</original>
    <variation>F</variation>
    <location>
        <position position="1389"/>
    </location>
</feature>
<feature type="sequence conflict" description="In Ref. 1; AAG33967 and 7; BAA23269." evidence="25" ref="1 7">
    <original>Q</original>
    <variation>L</variation>
    <location>
        <position position="1399"/>
    </location>
</feature>
<feature type="sequence conflict" description="In Ref. 1; AAG33967 and 7; BAA23269." evidence="25" ref="1 7">
    <original>Q</original>
    <variation>P</variation>
    <location>
        <position position="1416"/>
    </location>
</feature>
<feature type="sequence conflict" description="In Ref. 1; AAG33967." evidence="25" ref="1">
    <original>M</original>
    <variation>V</variation>
    <location>
        <position position="1532"/>
    </location>
</feature>
<feature type="sequence conflict" description="In Ref. 9; AAK54505." evidence="25" ref="9">
    <original>D</original>
    <variation>A</variation>
    <location>
        <position position="1638"/>
    </location>
</feature>
<feature type="sequence conflict" description="In Ref. 10; BAD96995." evidence="25" ref="10">
    <original>A</original>
    <variation>T</variation>
    <location>
        <position position="1789"/>
    </location>
</feature>
<feature type="sequence conflict" description="In Ref. 9; AAK54505." evidence="25" ref="9">
    <original>S</original>
    <variation>R</variation>
    <location>
        <position position="1839"/>
    </location>
</feature>
<feature type="sequence conflict" description="In Ref. 9; AAK54505." evidence="25" ref="9">
    <original>N</original>
    <variation>D</variation>
    <location>
        <position position="2131"/>
    </location>
</feature>
<feature type="sequence conflict" description="In Ref. 9; AAK54505." evidence="25" ref="9">
    <original>R</original>
    <variation>H</variation>
    <location>
        <position position="2143"/>
    </location>
</feature>
<feature type="sequence conflict" description="In Ref. 9; AAK54505." evidence="25" ref="9">
    <original>K</original>
    <variation>E</variation>
    <location>
        <position position="2159"/>
    </location>
</feature>
<feature type="sequence conflict" description="In Ref. 10; BAD96995." evidence="25" ref="10">
    <original>A</original>
    <variation>T</variation>
    <location>
        <position position="2182"/>
    </location>
</feature>
<feature type="helix" evidence="39">
    <location>
        <begin position="1010"/>
        <end position="1012"/>
    </location>
</feature>
<feature type="strand" evidence="39">
    <location>
        <begin position="1014"/>
        <end position="1016"/>
    </location>
</feature>
<feature type="helix" evidence="39">
    <location>
        <begin position="1018"/>
        <end position="1033"/>
    </location>
</feature>
<feature type="strand" evidence="39">
    <location>
        <begin position="1045"/>
        <end position="1048"/>
    </location>
</feature>
<feature type="helix" evidence="39">
    <location>
        <begin position="1051"/>
        <end position="1061"/>
    </location>
</feature>
<feature type="helix" evidence="39">
    <location>
        <begin position="1066"/>
        <end position="1068"/>
    </location>
</feature>
<feature type="helix" evidence="39">
    <location>
        <begin position="1072"/>
        <end position="1079"/>
    </location>
</feature>
<feature type="helix" evidence="39">
    <location>
        <begin position="1087"/>
        <end position="1099"/>
    </location>
</feature>
<feature type="turn" evidence="39">
    <location>
        <begin position="1100"/>
        <end position="1107"/>
    </location>
</feature>
<feature type="turn" evidence="39">
    <location>
        <begin position="1109"/>
        <end position="1111"/>
    </location>
</feature>
<feature type="helix" evidence="40">
    <location>
        <begin position="1646"/>
        <end position="1648"/>
    </location>
</feature>
<feature type="turn" evidence="40">
    <location>
        <begin position="1662"/>
        <end position="1664"/>
    </location>
</feature>
<feature type="helix" evidence="40">
    <location>
        <begin position="1669"/>
        <end position="1678"/>
    </location>
</feature>
<feature type="helix" evidence="40">
    <location>
        <begin position="1681"/>
        <end position="1696"/>
    </location>
</feature>
<feature type="helix" evidence="40">
    <location>
        <begin position="1698"/>
        <end position="1700"/>
    </location>
</feature>
<feature type="turn" evidence="40">
    <location>
        <begin position="1701"/>
        <end position="1703"/>
    </location>
</feature>
<feature type="helix" evidence="40">
    <location>
        <begin position="1706"/>
        <end position="1708"/>
    </location>
</feature>
<feature type="helix" evidence="40">
    <location>
        <begin position="1712"/>
        <end position="1728"/>
    </location>
</feature>
<feature type="strand" evidence="40">
    <location>
        <begin position="1734"/>
        <end position="1738"/>
    </location>
</feature>
<feature type="helix" evidence="40">
    <location>
        <begin position="1741"/>
        <end position="1744"/>
    </location>
</feature>
<feature type="turn" evidence="40">
    <location>
        <begin position="1803"/>
        <end position="1805"/>
    </location>
</feature>
<feature type="strand" evidence="40">
    <location>
        <begin position="1814"/>
        <end position="1816"/>
    </location>
</feature>
<feature type="strand" evidence="40">
    <location>
        <begin position="1822"/>
        <end position="1825"/>
    </location>
</feature>
<feature type="strand" evidence="40">
    <location>
        <begin position="1830"/>
        <end position="1833"/>
    </location>
</feature>
<feature type="helix" evidence="40">
    <location>
        <begin position="1841"/>
        <end position="1845"/>
    </location>
</feature>
<feature type="helix" evidence="40">
    <location>
        <begin position="1972"/>
        <end position="1991"/>
    </location>
</feature>
<feature type="helix" evidence="40">
    <location>
        <begin position="1997"/>
        <end position="2001"/>
    </location>
</feature>
<feature type="helix" evidence="40">
    <location>
        <begin position="2005"/>
        <end position="2015"/>
    </location>
</feature>
<feature type="helix" evidence="40">
    <location>
        <begin position="2050"/>
        <end position="2067"/>
    </location>
</feature>
<feature type="helix" evidence="40">
    <location>
        <begin position="2068"/>
        <end position="2070"/>
    </location>
</feature>
<feature type="strand" evidence="40">
    <location>
        <begin position="2074"/>
        <end position="2076"/>
    </location>
</feature>
<feature type="helix" evidence="40">
    <location>
        <begin position="2078"/>
        <end position="2093"/>
    </location>
</feature>
<feature type="strand" evidence="40">
    <location>
        <begin position="2096"/>
        <end position="2101"/>
    </location>
</feature>
<feature type="helix" evidence="40">
    <location>
        <begin position="2114"/>
        <end position="2126"/>
    </location>
</feature>
<feature type="helix" evidence="40">
    <location>
        <begin position="2129"/>
        <end position="2136"/>
    </location>
</feature>
<feature type="helix" evidence="40">
    <location>
        <begin position="2141"/>
        <end position="2157"/>
    </location>
</feature>
<feature type="helix" evidence="40">
    <location>
        <begin position="2161"/>
        <end position="2177"/>
    </location>
</feature>
<feature type="helix" evidence="40">
    <location>
        <begin position="2179"/>
        <end position="2186"/>
    </location>
</feature>
<feature type="helix" evidence="40">
    <location>
        <begin position="2191"/>
        <end position="2208"/>
    </location>
</feature>
<feature type="helix" evidence="40">
    <location>
        <begin position="2229"/>
        <end position="2242"/>
    </location>
</feature>
<feature type="strand" evidence="40">
    <location>
        <begin position="2245"/>
        <end position="2247"/>
    </location>
</feature>
<feature type="helix" evidence="40">
    <location>
        <begin position="2248"/>
        <end position="2251"/>
    </location>
</feature>
<feature type="turn" evidence="40">
    <location>
        <begin position="2252"/>
        <end position="2254"/>
    </location>
</feature>
<feature type="helix" evidence="40">
    <location>
        <begin position="2255"/>
        <end position="2263"/>
    </location>
</feature>
<feature type="helix" evidence="40">
    <location>
        <begin position="2269"/>
        <end position="2283"/>
    </location>
</feature>
<evidence type="ECO:0000250" key="1">
    <source>
        <dbReference type="UniProtKB" id="A2BH40"/>
    </source>
</evidence>
<evidence type="ECO:0000255" key="2">
    <source>
        <dbReference type="PROSITE-ProRule" id="PRU00355"/>
    </source>
</evidence>
<evidence type="ECO:0000256" key="3">
    <source>
        <dbReference type="SAM" id="MobiDB-lite"/>
    </source>
</evidence>
<evidence type="ECO:0000269" key="4">
    <source>
    </source>
</evidence>
<evidence type="ECO:0000269" key="5">
    <source>
    </source>
</evidence>
<evidence type="ECO:0000269" key="6">
    <source>
    </source>
</evidence>
<evidence type="ECO:0000269" key="7">
    <source>
    </source>
</evidence>
<evidence type="ECO:0000269" key="8">
    <source>
    </source>
</evidence>
<evidence type="ECO:0000269" key="9">
    <source>
    </source>
</evidence>
<evidence type="ECO:0000269" key="10">
    <source>
    </source>
</evidence>
<evidence type="ECO:0000269" key="11">
    <source>
    </source>
</evidence>
<evidence type="ECO:0000269" key="12">
    <source>
    </source>
</evidence>
<evidence type="ECO:0000269" key="13">
    <source>
    </source>
</evidence>
<evidence type="ECO:0000269" key="14">
    <source>
    </source>
</evidence>
<evidence type="ECO:0000269" key="15">
    <source>
    </source>
</evidence>
<evidence type="ECO:0000269" key="16">
    <source>
    </source>
</evidence>
<evidence type="ECO:0000269" key="17">
    <source>
    </source>
</evidence>
<evidence type="ECO:0000269" key="18">
    <source>
    </source>
</evidence>
<evidence type="ECO:0000269" key="19">
    <source>
    </source>
</evidence>
<evidence type="ECO:0000303" key="20">
    <source>
    </source>
</evidence>
<evidence type="ECO:0000303" key="21">
    <source>
    </source>
</evidence>
<evidence type="ECO:0000303" key="22">
    <source>
    </source>
</evidence>
<evidence type="ECO:0000303" key="23">
    <source>
    </source>
</evidence>
<evidence type="ECO:0000303" key="24">
    <source>
    </source>
</evidence>
<evidence type="ECO:0000305" key="25"/>
<evidence type="ECO:0007744" key="26">
    <source>
    </source>
</evidence>
<evidence type="ECO:0007744" key="27">
    <source>
    </source>
</evidence>
<evidence type="ECO:0007744" key="28">
    <source>
    </source>
</evidence>
<evidence type="ECO:0007744" key="29">
    <source>
    </source>
</evidence>
<evidence type="ECO:0007744" key="30">
    <source>
    </source>
</evidence>
<evidence type="ECO:0007744" key="31">
    <source>
    </source>
</evidence>
<evidence type="ECO:0007744" key="32">
    <source>
    </source>
</evidence>
<evidence type="ECO:0007744" key="33">
    <source>
    </source>
</evidence>
<evidence type="ECO:0007744" key="34">
    <source>
    </source>
</evidence>
<evidence type="ECO:0007744" key="35">
    <source>
    </source>
</evidence>
<evidence type="ECO:0007744" key="36">
    <source>
    </source>
</evidence>
<evidence type="ECO:0007744" key="37">
    <source>
    </source>
</evidence>
<evidence type="ECO:0007744" key="38">
    <source>
    </source>
</evidence>
<evidence type="ECO:0007829" key="39">
    <source>
        <dbReference type="PDB" id="1RYU"/>
    </source>
</evidence>
<evidence type="ECO:0007829" key="40">
    <source>
        <dbReference type="PDB" id="6LTH"/>
    </source>
</evidence>
<proteinExistence type="evidence at protein level"/>
<keyword id="KW-0002">3D-structure</keyword>
<keyword id="KW-0007">Acetylation</keyword>
<keyword id="KW-0025">Alternative splicing</keyword>
<keyword id="KW-0156">Chromatin regulator</keyword>
<keyword id="KW-0903">Direct protein sequencing</keyword>
<keyword id="KW-0238">DNA-binding</keyword>
<keyword id="KW-0991">Intellectual disability</keyword>
<keyword id="KW-0488">Methylation</keyword>
<keyword id="KW-0524">Neurogenesis</keyword>
<keyword id="KW-0539">Nucleus</keyword>
<keyword id="KW-0597">Phosphoprotein</keyword>
<keyword id="KW-1267">Proteomics identification</keyword>
<keyword id="KW-1185">Reference proteome</keyword>
<keyword id="KW-0804">Transcription</keyword>
<keyword id="KW-0805">Transcription regulation</keyword>
<organism>
    <name type="scientific">Homo sapiens</name>
    <name type="common">Human</name>
    <dbReference type="NCBI Taxonomy" id="9606"/>
    <lineage>
        <taxon>Eukaryota</taxon>
        <taxon>Metazoa</taxon>
        <taxon>Chordata</taxon>
        <taxon>Craniata</taxon>
        <taxon>Vertebrata</taxon>
        <taxon>Euteleostomi</taxon>
        <taxon>Mammalia</taxon>
        <taxon>Eutheria</taxon>
        <taxon>Euarchontoglires</taxon>
        <taxon>Primates</taxon>
        <taxon>Haplorrhini</taxon>
        <taxon>Catarrhini</taxon>
        <taxon>Hominidae</taxon>
        <taxon>Homo</taxon>
    </lineage>
</organism>
<gene>
    <name type="primary">ARID1A</name>
    <name type="synonym">BAF250</name>
    <name type="synonym">BAF250A</name>
    <name type="synonym">C1orf4</name>
    <name type="synonym">OSA1</name>
    <name type="synonym">SMARCF1</name>
</gene>
<accession>O14497</accession>
<accession>D3DPL1</accession>
<accession>Q53FK9</accession>
<accession>Q5T0W1</accession>
<accession>Q5T0W2</accession>
<accession>Q5T0W3</accession>
<accession>Q8NFD6</accession>
<accession>Q96T89</accession>
<accession>Q9BY33</accession>
<accession>Q9HBJ5</accession>
<accession>Q9UPZ1</accession>
<name>ARI1A_HUMAN</name>
<reference key="1">
    <citation type="journal article" date="2000" name="Mol. Cell. Biol.">
        <title>A specificity and targeting subunit of a human SWI/SNF family-related chromatin-remodeling complex.</title>
        <authorList>
            <person name="Nie Z."/>
            <person name="Xue Y."/>
            <person name="Yang D."/>
            <person name="Zhou S."/>
            <person name="Deroo B.J."/>
            <person name="Archer T.K."/>
            <person name="Wang W."/>
        </authorList>
    </citation>
    <scope>NUCLEOTIDE SEQUENCE [MRNA] (ISOFORM 1)</scope>
    <scope>PARTIAL PROTEIN SEQUENCE</scope>
    <scope>TISSUE SPECIFICITY</scope>
    <scope>IDENTIFICATION IN THE BAF COMPLEX</scope>
</reference>
<reference key="2">
    <citation type="journal article" date="2006" name="Nature">
        <title>The DNA sequence and biological annotation of human chromosome 1.</title>
        <authorList>
            <person name="Gregory S.G."/>
            <person name="Barlow K.F."/>
            <person name="McLay K.E."/>
            <person name="Kaul R."/>
            <person name="Swarbreck D."/>
            <person name="Dunham A."/>
            <person name="Scott C.E."/>
            <person name="Howe K.L."/>
            <person name="Woodfine K."/>
            <person name="Spencer C.C.A."/>
            <person name="Jones M.C."/>
            <person name="Gillson C."/>
            <person name="Searle S."/>
            <person name="Zhou Y."/>
            <person name="Kokocinski F."/>
            <person name="McDonald L."/>
            <person name="Evans R."/>
            <person name="Phillips K."/>
            <person name="Atkinson A."/>
            <person name="Cooper R."/>
            <person name="Jones C."/>
            <person name="Hall R.E."/>
            <person name="Andrews T.D."/>
            <person name="Lloyd C."/>
            <person name="Ainscough R."/>
            <person name="Almeida J.P."/>
            <person name="Ambrose K.D."/>
            <person name="Anderson F."/>
            <person name="Andrew R.W."/>
            <person name="Ashwell R.I.S."/>
            <person name="Aubin K."/>
            <person name="Babbage A.K."/>
            <person name="Bagguley C.L."/>
            <person name="Bailey J."/>
            <person name="Beasley H."/>
            <person name="Bethel G."/>
            <person name="Bird C.P."/>
            <person name="Bray-Allen S."/>
            <person name="Brown J.Y."/>
            <person name="Brown A.J."/>
            <person name="Buckley D."/>
            <person name="Burton J."/>
            <person name="Bye J."/>
            <person name="Carder C."/>
            <person name="Chapman J.C."/>
            <person name="Clark S.Y."/>
            <person name="Clarke G."/>
            <person name="Clee C."/>
            <person name="Cobley V."/>
            <person name="Collier R.E."/>
            <person name="Corby N."/>
            <person name="Coville G.J."/>
            <person name="Davies J."/>
            <person name="Deadman R."/>
            <person name="Dunn M."/>
            <person name="Earthrowl M."/>
            <person name="Ellington A.G."/>
            <person name="Errington H."/>
            <person name="Frankish A."/>
            <person name="Frankland J."/>
            <person name="French L."/>
            <person name="Garner P."/>
            <person name="Garnett J."/>
            <person name="Gay L."/>
            <person name="Ghori M.R.J."/>
            <person name="Gibson R."/>
            <person name="Gilby L.M."/>
            <person name="Gillett W."/>
            <person name="Glithero R.J."/>
            <person name="Grafham D.V."/>
            <person name="Griffiths C."/>
            <person name="Griffiths-Jones S."/>
            <person name="Grocock R."/>
            <person name="Hammond S."/>
            <person name="Harrison E.S.I."/>
            <person name="Hart E."/>
            <person name="Haugen E."/>
            <person name="Heath P.D."/>
            <person name="Holmes S."/>
            <person name="Holt K."/>
            <person name="Howden P.J."/>
            <person name="Hunt A.R."/>
            <person name="Hunt S.E."/>
            <person name="Hunter G."/>
            <person name="Isherwood J."/>
            <person name="James R."/>
            <person name="Johnson C."/>
            <person name="Johnson D."/>
            <person name="Joy A."/>
            <person name="Kay M."/>
            <person name="Kershaw J.K."/>
            <person name="Kibukawa M."/>
            <person name="Kimberley A.M."/>
            <person name="King A."/>
            <person name="Knights A.J."/>
            <person name="Lad H."/>
            <person name="Laird G."/>
            <person name="Lawlor S."/>
            <person name="Leongamornlert D.A."/>
            <person name="Lloyd D.M."/>
            <person name="Loveland J."/>
            <person name="Lovell J."/>
            <person name="Lush M.J."/>
            <person name="Lyne R."/>
            <person name="Martin S."/>
            <person name="Mashreghi-Mohammadi M."/>
            <person name="Matthews L."/>
            <person name="Matthews N.S.W."/>
            <person name="McLaren S."/>
            <person name="Milne S."/>
            <person name="Mistry S."/>
            <person name="Moore M.J.F."/>
            <person name="Nickerson T."/>
            <person name="O'Dell C.N."/>
            <person name="Oliver K."/>
            <person name="Palmeiri A."/>
            <person name="Palmer S.A."/>
            <person name="Parker A."/>
            <person name="Patel D."/>
            <person name="Pearce A.V."/>
            <person name="Peck A.I."/>
            <person name="Pelan S."/>
            <person name="Phelps K."/>
            <person name="Phillimore B.J."/>
            <person name="Plumb R."/>
            <person name="Rajan J."/>
            <person name="Raymond C."/>
            <person name="Rouse G."/>
            <person name="Saenphimmachak C."/>
            <person name="Sehra H.K."/>
            <person name="Sheridan E."/>
            <person name="Shownkeen R."/>
            <person name="Sims S."/>
            <person name="Skuce C.D."/>
            <person name="Smith M."/>
            <person name="Steward C."/>
            <person name="Subramanian S."/>
            <person name="Sycamore N."/>
            <person name="Tracey A."/>
            <person name="Tromans A."/>
            <person name="Van Helmond Z."/>
            <person name="Wall M."/>
            <person name="Wallis J.M."/>
            <person name="White S."/>
            <person name="Whitehead S.L."/>
            <person name="Wilkinson J.E."/>
            <person name="Willey D.L."/>
            <person name="Williams H."/>
            <person name="Wilming L."/>
            <person name="Wray P.W."/>
            <person name="Wu Z."/>
            <person name="Coulson A."/>
            <person name="Vaudin M."/>
            <person name="Sulston J.E."/>
            <person name="Durbin R.M."/>
            <person name="Hubbard T."/>
            <person name="Wooster R."/>
            <person name="Dunham I."/>
            <person name="Carter N.P."/>
            <person name="McVean G."/>
            <person name="Ross M.T."/>
            <person name="Harrow J."/>
            <person name="Olson M.V."/>
            <person name="Beck S."/>
            <person name="Rogers J."/>
            <person name="Bentley D.R."/>
        </authorList>
    </citation>
    <scope>NUCLEOTIDE SEQUENCE [LARGE SCALE GENOMIC DNA]</scope>
</reference>
<reference key="3">
    <citation type="submission" date="2005-09" db="EMBL/GenBank/DDBJ databases">
        <authorList>
            <person name="Mural R.J."/>
            <person name="Istrail S."/>
            <person name="Sutton G.G."/>
            <person name="Florea L."/>
            <person name="Halpern A.L."/>
            <person name="Mobarry C.M."/>
            <person name="Lippert R."/>
            <person name="Walenz B."/>
            <person name="Shatkay H."/>
            <person name="Dew I."/>
            <person name="Miller J.R."/>
            <person name="Flanigan M.J."/>
            <person name="Edwards N.J."/>
            <person name="Bolanos R."/>
            <person name="Fasulo D."/>
            <person name="Halldorsson B.V."/>
            <person name="Hannenhalli S."/>
            <person name="Turner R."/>
            <person name="Yooseph S."/>
            <person name="Lu F."/>
            <person name="Nusskern D.R."/>
            <person name="Shue B.C."/>
            <person name="Zheng X.H."/>
            <person name="Zhong F."/>
            <person name="Delcher A.L."/>
            <person name="Huson D.H."/>
            <person name="Kravitz S.A."/>
            <person name="Mouchard L."/>
            <person name="Reinert K."/>
            <person name="Remington K.A."/>
            <person name="Clark A.G."/>
            <person name="Waterman M.S."/>
            <person name="Eichler E.E."/>
            <person name="Adams M.D."/>
            <person name="Hunkapiller M.W."/>
            <person name="Myers E.W."/>
            <person name="Venter J.C."/>
        </authorList>
    </citation>
    <scope>NUCLEOTIDE SEQUENCE [LARGE SCALE GENOMIC DNA]</scope>
</reference>
<reference key="4">
    <citation type="journal article" date="2002" name="J. Biol. Chem.">
        <title>Largest subunits of the human SWI/SNF chromatin-remodeling complex promote transcriptional activation by steroid hormone receptors.</title>
        <authorList>
            <person name="Inoue H."/>
            <person name="Furukawa T."/>
            <person name="Giannakopoulos S."/>
            <person name="Zhou S."/>
            <person name="King D.S."/>
            <person name="Tanese N."/>
        </authorList>
    </citation>
    <scope>NUCLEOTIDE SEQUENCE [MRNA] OF 287-2285 (ISOFORM 1)</scope>
    <scope>TISSUE SPECIFICITY</scope>
    <scope>INTERACTION WITH SMARCA2 AND SMARCA4</scope>
    <scope>IDENTIFICATION IN A SWI/SNF COMPLEX WITH ARID1B</scope>
</reference>
<reference key="5">
    <citation type="journal article" date="2002" name="J. Biol. Chem.">
        <title>SYT associates with human SNF/SWI complexes and the C-terminal region of its fusion partner SSX1 targets histones.</title>
        <authorList>
            <person name="Kato H."/>
            <person name="Tjernberg A."/>
            <person name="Zhang W."/>
            <person name="Krutchinsky A.N."/>
            <person name="An W."/>
            <person name="Takeuchi T."/>
            <person name="Ohtsuki Y."/>
            <person name="Sugano S."/>
            <person name="de Bruijn D.R."/>
            <person name="Chait B.T."/>
            <person name="Roeder R.G."/>
        </authorList>
    </citation>
    <scope>NUCLEOTIDE SEQUENCE [MRNA] OF 347-2285 (ISOFORM 1)</scope>
    <scope>IDENTIFICATION BY MASS SPECTROMETRY</scope>
    <scope>IDENTIFICATION IN THE BAF COMPLEX</scope>
    <source>
        <tissue>Brain</tissue>
    </source>
</reference>
<reference key="6">
    <citation type="journal article" date="2000" name="Mol. Cell. Biol.">
        <title>The human SWI-SNF complex protein p270 is an ARID family member with non-sequence-specific DNA binding activity.</title>
        <authorList>
            <person name="Dallas P.B."/>
            <person name="Pacchione S."/>
            <person name="Wilsker D."/>
            <person name="Bowrin V."/>
            <person name="Kobayashi R."/>
            <person name="Moran E."/>
        </authorList>
    </citation>
    <scope>NUCLEOTIDE SEQUENCE [MRNA] OF 358-2285 (ISOFORM 1)</scope>
    <scope>MUTAGENESIS OF TRP-1073 AND TYR-1096</scope>
</reference>
<reference key="7">
    <citation type="journal article" date="1997" name="Gene">
        <title>Molecular cloning and expression of a novel human cDNA containing CAG repeats.</title>
        <authorList>
            <person name="Takeuchi T."/>
            <person name="Chen B.-K."/>
            <person name="Qiu Y."/>
            <person name="Sonobe H."/>
            <person name="Ohtsuki Y."/>
        </authorList>
    </citation>
    <scope>NUCLEOTIDE SEQUENCE [MRNA] OF 1-1585 (ISOFORM 3)</scope>
</reference>
<reference key="8">
    <citation type="submission" date="1999-02" db="EMBL/GenBank/DDBJ databases">
        <authorList>
            <person name="Takeuchi T."/>
            <person name="Misaki A."/>
        </authorList>
    </citation>
    <scope>NUCLEOTIDE SEQUENCE [GENOMIC DNA] OF 380-1515</scope>
</reference>
<reference key="9">
    <citation type="journal article" date="2001" name="Genomics">
        <title>Characterization of mammalian orthologues of the Drosophila osa gene: cDNA cloning, expression, chromosomal localization, and direct physical interaction with Brahma chromatin-remodeling complex.</title>
        <authorList>
            <person name="Kozmik Z."/>
            <person name="Machon O."/>
            <person name="Kralova J."/>
            <person name="Kreslova J."/>
            <person name="Paces J."/>
            <person name="Vlcek C."/>
        </authorList>
    </citation>
    <scope>NUCLEOTIDE SEQUENCE [MRNA] OF 384-2285 (ISOFORM 2)</scope>
    <scope>ALTERNATIVE SPLICING (ISOFORM 1)</scope>
    <scope>SUBCELLULAR LOCATION</scope>
    <scope>TISSUE SPECIFICITY</scope>
</reference>
<reference key="10">
    <citation type="submission" date="2005-04" db="EMBL/GenBank/DDBJ databases">
        <authorList>
            <person name="Suzuki Y."/>
            <person name="Sugano S."/>
            <person name="Totoki Y."/>
            <person name="Toyoda A."/>
            <person name="Takeda T."/>
            <person name="Sakaki Y."/>
            <person name="Tanaka A."/>
            <person name="Yokoyama S."/>
        </authorList>
    </citation>
    <scope>NUCLEOTIDE SEQUENCE [LARGE SCALE MRNA] OF 1104-2285 (ISOFORM 1)</scope>
    <source>
        <tissue>Gastric mucosa</tissue>
    </source>
</reference>
<reference key="11">
    <citation type="journal article" date="1996" name="Genes Dev.">
        <title>Diversity and specialization of mammalian SWI/SNF complexes.</title>
        <authorList>
            <person name="Wang W."/>
            <person name="Xue Y."/>
            <person name="Zhou S."/>
            <person name="Kuo A."/>
            <person name="Cairns B.R."/>
            <person name="Crabtree G.R."/>
        </authorList>
    </citation>
    <scope>IDENTIFICATION IN SWI/SNF COMPLEXES</scope>
</reference>
<reference key="12">
    <citation type="journal article" date="2001" name="Nature">
        <title>Selectivity of chromatin-remodelling cofactors for ligand-activated transcription.</title>
        <authorList>
            <person name="Lemon B."/>
            <person name="Inouye C."/>
            <person name="King D.S."/>
            <person name="Tjian R."/>
        </authorList>
    </citation>
    <scope>IDENTIFICATION IN A SWI/SNF COMPLEX</scope>
</reference>
<reference key="13">
    <citation type="journal article" date="2002" name="Biochem. J.">
        <title>Cloning and characterization of hELD/OSA1, a novel BRG1 interacting protein.</title>
        <authorList>
            <person name="Hurlstone A.F."/>
            <person name="Olave I.A."/>
            <person name="Barker N."/>
            <person name="van Noort M."/>
            <person name="Clevers H."/>
        </authorList>
    </citation>
    <scope>IDENTIFICATION IN A SWI/SNF-LIKE COMPLEX WITH ARID1A</scope>
</reference>
<reference key="14">
    <citation type="journal article" date="2006" name="Cell">
        <title>Global, in vivo, and site-specific phosphorylation dynamics in signaling networks.</title>
        <authorList>
            <person name="Olsen J.V."/>
            <person name="Blagoev B."/>
            <person name="Gnad F."/>
            <person name="Macek B."/>
            <person name="Kumar C."/>
            <person name="Mortensen P."/>
            <person name="Mann M."/>
        </authorList>
    </citation>
    <scope>PHOSPHORYLATION [LARGE SCALE ANALYSIS] AT SER-363</scope>
    <scope>IDENTIFICATION BY MASS SPECTROMETRY [LARGE SCALE ANALYSIS]</scope>
    <source>
        <tissue>Cervix carcinoma</tissue>
    </source>
</reference>
<reference key="15">
    <citation type="journal article" date="2006" name="Nat. Biotechnol.">
        <title>A probability-based approach for high-throughput protein phosphorylation analysis and site localization.</title>
        <authorList>
            <person name="Beausoleil S.A."/>
            <person name="Villen J."/>
            <person name="Gerber S.A."/>
            <person name="Rush J."/>
            <person name="Gygi S.P."/>
        </authorList>
    </citation>
    <scope>PHOSPHORYLATION [LARGE SCALE ANALYSIS] AT SER-696; SER-698 AND SER-702</scope>
    <scope>IDENTIFICATION BY MASS SPECTROMETRY [LARGE SCALE ANALYSIS]</scope>
    <source>
        <tissue>Cervix carcinoma</tissue>
    </source>
</reference>
<reference key="16">
    <citation type="journal article" date="2007" name="Science">
        <title>ATM and ATR substrate analysis reveals extensive protein networks responsive to DNA damage.</title>
        <authorList>
            <person name="Matsuoka S."/>
            <person name="Ballif B.A."/>
            <person name="Smogorzewska A."/>
            <person name="McDonald E.R. III"/>
            <person name="Hurov K.E."/>
            <person name="Luo J."/>
            <person name="Bakalarski C.E."/>
            <person name="Zhao Z."/>
            <person name="Solimini N."/>
            <person name="Lerenthal Y."/>
            <person name="Shiloh Y."/>
            <person name="Gygi S.P."/>
            <person name="Elledge S.J."/>
        </authorList>
    </citation>
    <scope>IDENTIFICATION BY MASS SPECTROMETRY [LARGE SCALE ANALYSIS]</scope>
    <source>
        <tissue>Embryonic kidney</tissue>
    </source>
</reference>
<reference key="17">
    <citation type="journal article" date="2008" name="J. Proteome Res.">
        <title>Combining protein-based IMAC, peptide-based IMAC, and MudPIT for efficient phosphoproteomic analysis.</title>
        <authorList>
            <person name="Cantin G.T."/>
            <person name="Yi W."/>
            <person name="Lu B."/>
            <person name="Park S.K."/>
            <person name="Xu T."/>
            <person name="Lee J.-D."/>
            <person name="Yates J.R. III"/>
        </authorList>
    </citation>
    <scope>PHOSPHORYLATION [LARGE SCALE ANALYSIS] AT SER-772</scope>
    <scope>IDENTIFICATION BY MASS SPECTROMETRY [LARGE SCALE ANALYSIS]</scope>
    <source>
        <tissue>Cervix carcinoma</tissue>
    </source>
</reference>
<reference key="18">
    <citation type="journal article" date="2008" name="Proc. Natl. Acad. Sci. U.S.A.">
        <title>A quantitative atlas of mitotic phosphorylation.</title>
        <authorList>
            <person name="Dephoure N."/>
            <person name="Zhou C."/>
            <person name="Villen J."/>
            <person name="Beausoleil S.A."/>
            <person name="Bakalarski C.E."/>
            <person name="Elledge S.J."/>
            <person name="Gygi S.P."/>
        </authorList>
    </citation>
    <scope>PHOSPHORYLATION [LARGE SCALE ANALYSIS] AT THR-286; SER-301; SER-696; SER-698; SER-764; SER-772 AND SER-1944</scope>
    <scope>IDENTIFICATION BY MASS SPECTROMETRY [LARGE SCALE ANALYSIS]</scope>
    <source>
        <tissue>Cervix carcinoma</tissue>
    </source>
</reference>
<reference key="19">
    <citation type="journal article" date="2009" name="Anal. Chem.">
        <title>Lys-N and trypsin cover complementary parts of the phosphoproteome in a refined SCX-based approach.</title>
        <authorList>
            <person name="Gauci S."/>
            <person name="Helbig A.O."/>
            <person name="Slijper M."/>
            <person name="Krijgsveld J."/>
            <person name="Heck A.J."/>
            <person name="Mohammed S."/>
        </authorList>
    </citation>
    <scope>ACETYLATION [LARGE SCALE ANALYSIS] AT ALA-2</scope>
    <scope>CLEAVAGE OF INITIATOR METHIONINE [LARGE SCALE ANALYSIS]</scope>
    <scope>IDENTIFICATION BY MASS SPECTROMETRY [LARGE SCALE ANALYSIS]</scope>
</reference>
<reference key="20">
    <citation type="journal article" date="2009" name="Sci. Signal.">
        <title>Quantitative phosphoproteomic analysis of T cell receptor signaling reveals system-wide modulation of protein-protein interactions.</title>
        <authorList>
            <person name="Mayya V."/>
            <person name="Lundgren D.H."/>
            <person name="Hwang S.-I."/>
            <person name="Rezaul K."/>
            <person name="Wu L."/>
            <person name="Eng J.K."/>
            <person name="Rodionov V."/>
            <person name="Han D.K."/>
        </authorList>
    </citation>
    <scope>PHOSPHORYLATION [LARGE SCALE ANALYSIS] AT SER-79; THR-286; SER-363; SER-604; SER-696; SER-698; SER-702; SER-772 AND SER-1184</scope>
    <scope>IDENTIFICATION BY MASS SPECTROMETRY [LARGE SCALE ANALYSIS]</scope>
    <source>
        <tissue>Leukemic T-cell</tissue>
    </source>
</reference>
<reference key="21">
    <citation type="journal article" date="2009" name="Science">
        <title>Lysine acetylation targets protein complexes and co-regulates major cellular functions.</title>
        <authorList>
            <person name="Choudhary C."/>
            <person name="Kumar C."/>
            <person name="Gnad F."/>
            <person name="Nielsen M.L."/>
            <person name="Rehman M."/>
            <person name="Walther T.C."/>
            <person name="Olsen J.V."/>
            <person name="Mann M."/>
        </authorList>
    </citation>
    <scope>ACETYLATION [LARGE SCALE ANALYSIS] AT LYS-1612 AND LYS-1905</scope>
    <scope>IDENTIFICATION BY MASS SPECTROMETRY [LARGE SCALE ANALYSIS]</scope>
</reference>
<reference key="22">
    <citation type="journal article" date="2010" name="Sci. Signal.">
        <title>Quantitative phosphoproteomics reveals widespread full phosphorylation site occupancy during mitosis.</title>
        <authorList>
            <person name="Olsen J.V."/>
            <person name="Vermeulen M."/>
            <person name="Santamaria A."/>
            <person name="Kumar C."/>
            <person name="Miller M.L."/>
            <person name="Jensen L.J."/>
            <person name="Gnad F."/>
            <person name="Cox J."/>
            <person name="Jensen T.S."/>
            <person name="Nigg E.A."/>
            <person name="Brunak S."/>
            <person name="Mann M."/>
        </authorList>
    </citation>
    <scope>PHOSPHORYLATION [LARGE SCALE ANALYSIS] AT SER-772</scope>
    <scope>IDENTIFICATION BY MASS SPECTROMETRY [LARGE SCALE ANALYSIS]</scope>
    <source>
        <tissue>Cervix carcinoma</tissue>
    </source>
</reference>
<reference key="23">
    <citation type="journal article" date="2011" name="BMC Syst. Biol.">
        <title>Initial characterization of the human central proteome.</title>
        <authorList>
            <person name="Burkard T.R."/>
            <person name="Planyavsky M."/>
            <person name="Kaupe I."/>
            <person name="Breitwieser F.P."/>
            <person name="Buerckstuemmer T."/>
            <person name="Bennett K.L."/>
            <person name="Superti-Furga G."/>
            <person name="Colinge J."/>
        </authorList>
    </citation>
    <scope>IDENTIFICATION BY MASS SPECTROMETRY [LARGE SCALE ANALYSIS]</scope>
</reference>
<reference key="24">
    <citation type="journal article" date="2011" name="Sci. Signal.">
        <title>System-wide temporal characterization of the proteome and phosphoproteome of human embryonic stem cell differentiation.</title>
        <authorList>
            <person name="Rigbolt K.T."/>
            <person name="Prokhorova T.A."/>
            <person name="Akimov V."/>
            <person name="Henningsen J."/>
            <person name="Johansen P.T."/>
            <person name="Kratchmarova I."/>
            <person name="Kassem M."/>
            <person name="Mann M."/>
            <person name="Olsen J.V."/>
            <person name="Blagoev B."/>
        </authorList>
    </citation>
    <scope>PHOSPHORYLATION [LARGE SCALE ANALYSIS] AT SER-363; SER-696; SER-702 AND SER-1604</scope>
    <scope>IDENTIFICATION BY MASS SPECTROMETRY [LARGE SCALE ANALYSIS]</scope>
</reference>
<reference key="25">
    <citation type="journal article" date="2012" name="Nat. Genet.">
        <title>Mutations affecting components of the SWI/SNF complex cause Coffin-Siris syndrome.</title>
        <authorList>
            <person name="Tsurusaki Y."/>
            <person name="Okamoto N."/>
            <person name="Ohashi H."/>
            <person name="Kosho T."/>
            <person name="Imai Y."/>
            <person name="Hibi-Ko Y."/>
            <person name="Kaname T."/>
            <person name="Naritomi K."/>
            <person name="Kawame H."/>
            <person name="Wakui K."/>
            <person name="Fukushima Y."/>
            <person name="Homma T."/>
            <person name="Kato M."/>
            <person name="Hiraki Y."/>
            <person name="Yamagata T."/>
            <person name="Yano S."/>
            <person name="Mizuno S."/>
            <person name="Sakazume S."/>
            <person name="Ishii T."/>
            <person name="Nagai T."/>
            <person name="Shiina M."/>
            <person name="Ogata K."/>
            <person name="Ohta T."/>
            <person name="Niikawa N."/>
            <person name="Miyatake S."/>
            <person name="Okada I."/>
            <person name="Mizuguchi T."/>
            <person name="Doi H."/>
            <person name="Saitsu H."/>
            <person name="Miyake N."/>
            <person name="Matsumoto N."/>
        </authorList>
    </citation>
    <scope>INVOLVEMENT IN CSS2</scope>
</reference>
<reference key="26">
    <citation type="journal article" date="2012" name="Proc. Natl. Acad. Sci. U.S.A.">
        <title>N-terminal acetylome analyses and functional insights of the N-terminal acetyltransferase NatB.</title>
        <authorList>
            <person name="Van Damme P."/>
            <person name="Lasa M."/>
            <person name="Polevoda B."/>
            <person name="Gazquez C."/>
            <person name="Elosegui-Artola A."/>
            <person name="Kim D.S."/>
            <person name="De Juan-Pardo E."/>
            <person name="Demeyer K."/>
            <person name="Hole K."/>
            <person name="Larrea E."/>
            <person name="Timmerman E."/>
            <person name="Prieto J."/>
            <person name="Arnesen T."/>
            <person name="Sherman F."/>
            <person name="Gevaert K."/>
            <person name="Aldabe R."/>
        </authorList>
    </citation>
    <scope>ACETYLATION [LARGE SCALE ANALYSIS] AT ALA-2</scope>
    <scope>CLEAVAGE OF INITIATOR METHIONINE [LARGE SCALE ANALYSIS]</scope>
    <scope>IDENTIFICATION BY MASS SPECTROMETRY [LARGE SCALE ANALYSIS]</scope>
</reference>
<reference key="27">
    <citation type="journal article" date="2013" name="J. Proteome Res.">
        <title>Toward a comprehensive characterization of a human cancer cell phosphoproteome.</title>
        <authorList>
            <person name="Zhou H."/>
            <person name="Di Palma S."/>
            <person name="Preisinger C."/>
            <person name="Peng M."/>
            <person name="Polat A.N."/>
            <person name="Heck A.J."/>
            <person name="Mohammed S."/>
        </authorList>
    </citation>
    <scope>PHOSPHORYLATION [LARGE SCALE ANALYSIS] AT SER-58; SER-233; SER-363; SER-382; SER-604; SER-696; SER-698; SER-702; SER-764; SER-772; SER-1184; SER-1235; SER-1604; SER-1751; SER-1754; THR-1888; SER-1929 AND SER-1944</scope>
    <scope>IDENTIFICATION BY MASS SPECTROMETRY [LARGE SCALE ANALYSIS]</scope>
    <source>
        <tissue>Cervix carcinoma</tissue>
        <tissue>Erythroleukemia</tissue>
    </source>
</reference>
<reference key="28">
    <citation type="journal article" date="2014" name="J. Proteomics">
        <title>An enzyme assisted RP-RPLC approach for in-depth analysis of human liver phosphoproteome.</title>
        <authorList>
            <person name="Bian Y."/>
            <person name="Song C."/>
            <person name="Cheng K."/>
            <person name="Dong M."/>
            <person name="Wang F."/>
            <person name="Huang J."/>
            <person name="Sun D."/>
            <person name="Wang L."/>
            <person name="Ye M."/>
            <person name="Zou H."/>
        </authorList>
    </citation>
    <scope>PHOSPHORYLATION [LARGE SCALE ANALYSIS] AT SER-363; SER-696 AND SER-1751</scope>
    <scope>IDENTIFICATION BY MASS SPECTROMETRY [LARGE SCALE ANALYSIS]</scope>
    <source>
        <tissue>Liver</tissue>
    </source>
</reference>
<reference key="29">
    <citation type="journal article" date="2014" name="Mol. Cell. Proteomics">
        <title>Immunoaffinity enrichment and mass spectrometry analysis of protein methylation.</title>
        <authorList>
            <person name="Guo A."/>
            <person name="Gu H."/>
            <person name="Zhou J."/>
            <person name="Mulhern D."/>
            <person name="Wang Y."/>
            <person name="Lee K.A."/>
            <person name="Yang V."/>
            <person name="Aguiar M."/>
            <person name="Kornhauser J."/>
            <person name="Jia X."/>
            <person name="Ren J."/>
            <person name="Beausoleil S.A."/>
            <person name="Silva J.C."/>
            <person name="Vemulapalli V."/>
            <person name="Bedford M.T."/>
            <person name="Comb M.J."/>
        </authorList>
    </citation>
    <scope>METHYLATION [LARGE SCALE ANALYSIS] AT ARG-429 AND ARG-1276</scope>
    <scope>IDENTIFICATION BY MASS SPECTROMETRY [LARGE SCALE ANALYSIS]</scope>
    <source>
        <tissue>Colon carcinoma</tissue>
    </source>
</reference>
<reference key="30">
    <citation type="journal article" date="2003" name="Curr. Opin. Genet. Dev.">
        <title>Recent advances in understanding chromatin remodeling by SWI/SNF complexes.</title>
        <authorList>
            <person name="Martens J.A."/>
            <person name="Winston F."/>
        </authorList>
    </citation>
    <scope>REVIEW ON SWI/SNF CHROMATIN REMODELING COMPLEXES</scope>
</reference>
<reference key="31">
    <citation type="journal article" date="2003" name="Mol. Cell. Biol.">
        <title>Novel SWI/SNF chromatin-remodeling complexes contain a mixed-lineage leukemia chromosomal translocation partner.</title>
        <authorList>
            <person name="Nie Z."/>
            <person name="Yan Z."/>
            <person name="Chen E.H."/>
            <person name="Sechi S."/>
            <person name="Ling C."/>
            <person name="Zhou S."/>
            <person name="Xue Y."/>
            <person name="Yang D."/>
            <person name="Murray D."/>
            <person name="Kanakubo E."/>
            <person name="Cleary M.L."/>
            <person name="Wang W."/>
        </authorList>
    </citation>
    <scope>IDENTIFICATION IN A SWI/SNF-LIKE EBAFA COMPLEX</scope>
    <scope>IDENTIFICATION BY MASS SPECTROMETRY</scope>
</reference>
<reference key="32">
    <citation type="journal article" date="2004" name="Biochem. J.">
        <title>Two related ARID family proteins are alternative subunits of human SWI/SNF complexes.</title>
        <authorList>
            <person name="Wang X."/>
            <person name="Nagl N.G."/>
            <person name="Wilsker D."/>
            <person name="Van Scoy M."/>
            <person name="Pacchione S."/>
            <person name="Yaciuk P."/>
            <person name="Dallas P.B."/>
            <person name="Moran E."/>
        </authorList>
    </citation>
    <scope>IDENTIFICATION IN SWI/SNF COMPLEXES</scope>
    <scope>INTERACTION WITH SMARCA2; SMARCA4 AND SMARCC1</scope>
</reference>
<reference key="33">
    <citation type="journal article" date="2008" name="Genes Dev.">
        <title>Regulation of muscle development by DPF3, a novel histone acetylation and methylation reader of the BAF chromatin remodeling complex.</title>
        <authorList>
            <person name="Lange M."/>
            <person name="Kaynak B."/>
            <person name="Forster U.B."/>
            <person name="Toenjes M."/>
            <person name="Fischer J.J."/>
            <person name="Grimm C."/>
            <person name="Schlesinger J."/>
            <person name="Just S."/>
            <person name="Dunkel I."/>
            <person name="Krueger T."/>
            <person name="Mebus S."/>
            <person name="Lehrach H."/>
            <person name="Lurz R."/>
            <person name="Gobom J."/>
            <person name="Rottbauer W."/>
            <person name="Abdelilah-Seyfried S."/>
            <person name="Sperling S."/>
        </authorList>
    </citation>
    <scope>IDENTIFICATION IN THE BAF COMPLEX</scope>
    <scope>IDENTIFICATION BY MASS SPECTROMETRY</scope>
</reference>
<reference key="34">
    <citation type="journal article" date="2012" name="J. Biol. Chem.">
        <title>SWI/SNF chromatin-remodeling factors: multiscale analyses and diverse functions.</title>
        <authorList>
            <person name="Euskirchen G."/>
            <person name="Auerbach R.K."/>
            <person name="Snyder M."/>
        </authorList>
    </citation>
    <scope>REVIEW ON SWI/SNF CHROMATIN REMODELING COMPLEXES</scope>
</reference>
<reference key="35">
    <citation type="journal article" date="2015" name="Sci. Adv.">
        <title>Mammalian SWI/SNF chromatin remodeling complexes and cancer: Mechanistic insights gained from human genomics.</title>
        <authorList>
            <person name="Kadoch C."/>
            <person name="Crabtree G.R."/>
        </authorList>
    </citation>
    <scope>REVIEW ON SWI/SNF CHROMATIN REMODELING COMPLEXES</scope>
</reference>
<reference key="36">
    <citation type="journal article" date="2016" name="Biochem. Biophys. Res. Commun.">
        <title>Identification and functional characterization of a novel bipartite nuclear localization sequence in ARID1A.</title>
        <authorList>
            <person name="Bateman N.W."/>
            <person name="Shoji Y."/>
            <person name="Conrads K.A."/>
            <person name="Stroop K.D."/>
            <person name="Hamilton C.A."/>
            <person name="Darcy K.M."/>
            <person name="Maxwell G.L."/>
            <person name="Risinger J.I."/>
            <person name="Conrads T.P."/>
        </authorList>
    </citation>
    <scope>SUBCELLULAR LOCATION</scope>
    <scope>NUCLEAR LOCALIZATION SIGNAL</scope>
    <scope>MUTAGENESIS OF 1370-LYS-ARG-1371; ARG-1383 AND 1656-ARG--ARG-1658</scope>
</reference>
<reference key="37">
    <citation type="journal article" date="2004" name="J. Biol. Chem.">
        <title>Structure and DNA-binding sites of the SWI1 AT-rich interaction domain (ARID) suggest determinants for sequence-specific DNA recognition.</title>
        <authorList>
            <person name="Kim S."/>
            <person name="Zhang Z."/>
            <person name="Upchurch S."/>
            <person name="Isern N."/>
            <person name="Chen Y."/>
        </authorList>
    </citation>
    <scope>STRUCTURE BY NMR OF 1000-1159</scope>
</reference>
<reference key="38">
    <citation type="journal article" date="2011" name="Nature">
        <title>Exome sequencing identifies frequent mutation of the SWI/SNF complex gene PBRM1 in renal carcinoma.</title>
        <authorList>
            <person name="Varela I."/>
            <person name="Tarpey P."/>
            <person name="Raine K."/>
            <person name="Huang D."/>
            <person name="Ong C.K."/>
            <person name="Stephens P."/>
            <person name="Davies H."/>
            <person name="Jones D."/>
            <person name="Lin M.L."/>
            <person name="Teague J."/>
            <person name="Bignell G."/>
            <person name="Butler A."/>
            <person name="Cho J."/>
            <person name="Dalgliesh G.L."/>
            <person name="Galappaththige D."/>
            <person name="Greenman C."/>
            <person name="Hardy C."/>
            <person name="Jia M."/>
            <person name="Latimer C."/>
            <person name="Lau K.W."/>
            <person name="Marshall J."/>
            <person name="McLaren S."/>
            <person name="Menzies A."/>
            <person name="Mudie L."/>
            <person name="Stebbings L."/>
            <person name="Largaespada D.A."/>
            <person name="Wessels L.F.A."/>
            <person name="Richard S."/>
            <person name="Kahnoski R.J."/>
            <person name="Anema J."/>
            <person name="Tuveson D.A."/>
            <person name="Perez-Mancera P.A."/>
            <person name="Mustonen V."/>
            <person name="Fischer A."/>
            <person name="Adams D.J."/>
            <person name="Rust A."/>
            <person name="Chan-On W."/>
            <person name="Subimerb C."/>
            <person name="Dykema K."/>
            <person name="Furge K."/>
            <person name="Campbell P.J."/>
            <person name="Teh B.T."/>
            <person name="Stratton M.R."/>
            <person name="Futreal P.A."/>
        </authorList>
    </citation>
    <scope>VARIANTS LYS-1020 AND PRO-2089</scope>
</reference>
<reference key="39">
    <citation type="journal article" date="2012" name="Hum. Mutat.">
        <title>Somatic mutations in the chromatin remodeling gene ARID1A occur in several tumor types.</title>
        <authorList>
            <person name="Jones S."/>
            <person name="Li M."/>
            <person name="Parsons D.W."/>
            <person name="Zhang X."/>
            <person name="Wesseling J."/>
            <person name="Kristel P."/>
            <person name="Schmidt M.K."/>
            <person name="Markowitz S."/>
            <person name="Yan H."/>
            <person name="Bigner D."/>
            <person name="Hruban R.H."/>
            <person name="Eshleman J.R."/>
            <person name="Iacobuzio-Donahue C.A."/>
            <person name="Goggins M."/>
            <person name="Maitra A."/>
            <person name="Malek S.N."/>
            <person name="Powell S."/>
            <person name="Vogelstein B."/>
            <person name="Kinzler K.W."/>
            <person name="Velculescu V.E."/>
            <person name="Papadopoulos N."/>
        </authorList>
    </citation>
    <scope>VARIANTS TRP-1658; PHE-1907 AND ARG-2087</scope>
</reference>
<reference key="40">
    <citation type="journal article" date="2013" name="Hum. Mol. Genet.">
        <title>A comprehensive molecular study on Coffin-Siris and Nicolaides-Baraitser syndromes identifies a broad molecular and clinical spectrum converging on altered chromatin remodeling.</title>
        <authorList>
            <person name="Wieczorek D."/>
            <person name="Boegershausen N."/>
            <person name="Beleggia F."/>
            <person name="Steiner-Haldenstaett S."/>
            <person name="Pohl E."/>
            <person name="Li Y."/>
            <person name="Milz E."/>
            <person name="Martin M."/>
            <person name="Thiele H."/>
            <person name="Altmueller J."/>
            <person name="Alanay Y."/>
            <person name="Kayserili H."/>
            <person name="Klein-Hitpass L."/>
            <person name="Boehringer S."/>
            <person name="Wollstein A."/>
            <person name="Albrecht B."/>
            <person name="Boduroglu K."/>
            <person name="Caliebe A."/>
            <person name="Chrzanowska K."/>
            <person name="Cogulu O."/>
            <person name="Cristofoli F."/>
            <person name="Czeschik J.C."/>
            <person name="Devriendt K."/>
            <person name="Dotti M.T."/>
            <person name="Elcioglu N."/>
            <person name="Gener B."/>
            <person name="Goecke T.O."/>
            <person name="Krajewska-Walasek M."/>
            <person name="Guillen-Navarro E."/>
            <person name="Hayek J."/>
            <person name="Houge G."/>
            <person name="Kilic E."/>
            <person name="Simsek-Kiper P.O."/>
            <person name="Lopez-Gonzalez V."/>
            <person name="Kuechler A."/>
            <person name="Lyonnet S."/>
            <person name="Mari F."/>
            <person name="Marozza A."/>
            <person name="Mathieu Dramard M."/>
            <person name="Mikat B."/>
            <person name="Morin G."/>
            <person name="Morice-Picard F."/>
            <person name="Ozkinay F."/>
            <person name="Rauch A."/>
            <person name="Renieri A."/>
            <person name="Tinschert S."/>
            <person name="Utine G.E."/>
            <person name="Vilain C."/>
            <person name="Vivarelli R."/>
            <person name="Zweier C."/>
            <person name="Nuernberg P."/>
            <person name="Rahmann S."/>
            <person name="Vermeesch J."/>
            <person name="Luedecke H.J."/>
            <person name="Zeschnigk M."/>
            <person name="Wollnik B."/>
        </authorList>
    </citation>
    <scope>VARIANT SER-120</scope>
</reference>